<organism>
    <name type="scientific">Homo sapiens</name>
    <name type="common">Human</name>
    <dbReference type="NCBI Taxonomy" id="9606"/>
    <lineage>
        <taxon>Eukaryota</taxon>
        <taxon>Metazoa</taxon>
        <taxon>Chordata</taxon>
        <taxon>Craniata</taxon>
        <taxon>Vertebrata</taxon>
        <taxon>Euteleostomi</taxon>
        <taxon>Mammalia</taxon>
        <taxon>Eutheria</taxon>
        <taxon>Euarchontoglires</taxon>
        <taxon>Primates</taxon>
        <taxon>Haplorrhini</taxon>
        <taxon>Catarrhini</taxon>
        <taxon>Hominidae</taxon>
        <taxon>Homo</taxon>
    </lineage>
</organism>
<proteinExistence type="evidence at protein level"/>
<dbReference type="EMBL" id="AF006516">
    <property type="protein sequence ID" value="AAB62569.1"/>
    <property type="molecule type" value="mRNA"/>
</dbReference>
<dbReference type="EMBL" id="U87166">
    <property type="protein sequence ID" value="AAC39757.1"/>
    <property type="molecule type" value="mRNA"/>
</dbReference>
<dbReference type="EMBL" id="AB040151">
    <property type="protein sequence ID" value="BAB55675.1"/>
    <property type="molecule type" value="mRNA"/>
</dbReference>
<dbReference type="EMBL" id="AF540955">
    <property type="protein sequence ID" value="AAN28379.1"/>
    <property type="molecule type" value="mRNA"/>
</dbReference>
<dbReference type="EMBL" id="AF001628">
    <property type="protein sequence ID" value="AAD00897.1"/>
    <property type="molecule type" value="mRNA"/>
</dbReference>
<dbReference type="EMBL" id="AJ277065">
    <property type="protein sequence ID" value="CAB88006.1"/>
    <property type="molecule type" value="Genomic_DNA"/>
</dbReference>
<dbReference type="EMBL" id="AJ277066">
    <property type="protein sequence ID" value="CAB88006.1"/>
    <property type="status" value="JOINED"/>
    <property type="molecule type" value="Genomic_DNA"/>
</dbReference>
<dbReference type="EMBL" id="AJ277067">
    <property type="protein sequence ID" value="CAB88006.1"/>
    <property type="status" value="JOINED"/>
    <property type="molecule type" value="Genomic_DNA"/>
</dbReference>
<dbReference type="EMBL" id="AJ277068">
    <property type="protein sequence ID" value="CAB88006.1"/>
    <property type="status" value="JOINED"/>
    <property type="molecule type" value="Genomic_DNA"/>
</dbReference>
<dbReference type="EMBL" id="AJ277069">
    <property type="protein sequence ID" value="CAB88006.1"/>
    <property type="status" value="JOINED"/>
    <property type="molecule type" value="Genomic_DNA"/>
</dbReference>
<dbReference type="EMBL" id="AJ277070">
    <property type="protein sequence ID" value="CAB88006.1"/>
    <property type="status" value="JOINED"/>
    <property type="molecule type" value="Genomic_DNA"/>
</dbReference>
<dbReference type="EMBL" id="AJ277071">
    <property type="protein sequence ID" value="CAB88006.1"/>
    <property type="status" value="JOINED"/>
    <property type="molecule type" value="Genomic_DNA"/>
</dbReference>
<dbReference type="EMBL" id="AJ277072">
    <property type="protein sequence ID" value="CAB88006.1"/>
    <property type="status" value="JOINED"/>
    <property type="molecule type" value="Genomic_DNA"/>
</dbReference>
<dbReference type="EMBL" id="AJ277073">
    <property type="protein sequence ID" value="CAB88006.1"/>
    <property type="status" value="JOINED"/>
    <property type="molecule type" value="Genomic_DNA"/>
</dbReference>
<dbReference type="EMBL" id="AJ277074">
    <property type="protein sequence ID" value="CAB88006.1"/>
    <property type="status" value="JOINED"/>
    <property type="molecule type" value="Genomic_DNA"/>
</dbReference>
<dbReference type="EMBL" id="AF260262">
    <property type="protein sequence ID" value="AAF70309.1"/>
    <property type="molecule type" value="mRNA"/>
</dbReference>
<dbReference type="EMBL" id="AK126803">
    <property type="protein sequence ID" value="BAG54374.1"/>
    <property type="molecule type" value="mRNA"/>
</dbReference>
<dbReference type="EMBL" id="AK298646">
    <property type="protein sequence ID" value="BAG60820.1"/>
    <property type="molecule type" value="mRNA"/>
</dbReference>
<dbReference type="EMBL" id="AK291823">
    <property type="protein sequence ID" value="BAF84512.1"/>
    <property type="molecule type" value="mRNA"/>
</dbReference>
<dbReference type="EMBL" id="AL139404">
    <property type="protein sequence ID" value="CAH73112.1"/>
    <property type="molecule type" value="Genomic_DNA"/>
</dbReference>
<dbReference type="EMBL" id="AL390961">
    <property type="protein sequence ID" value="CAH73112.1"/>
    <property type="status" value="JOINED"/>
    <property type="molecule type" value="Genomic_DNA"/>
</dbReference>
<dbReference type="EMBL" id="AL139404">
    <property type="protein sequence ID" value="CAH73113.1"/>
    <property type="molecule type" value="Genomic_DNA"/>
</dbReference>
<dbReference type="EMBL" id="AL390961">
    <property type="protein sequence ID" value="CAH73113.1"/>
    <property type="status" value="JOINED"/>
    <property type="molecule type" value="Genomic_DNA"/>
</dbReference>
<dbReference type="EMBL" id="AL139404">
    <property type="protein sequence ID" value="CAH73114.1"/>
    <property type="molecule type" value="Genomic_DNA"/>
</dbReference>
<dbReference type="EMBL" id="AL390961">
    <property type="protein sequence ID" value="CAH73114.1"/>
    <property type="status" value="JOINED"/>
    <property type="molecule type" value="Genomic_DNA"/>
</dbReference>
<dbReference type="EMBL" id="AL139404">
    <property type="protein sequence ID" value="CAH73115.1"/>
    <property type="molecule type" value="Genomic_DNA"/>
</dbReference>
<dbReference type="EMBL" id="AL390961">
    <property type="protein sequence ID" value="CAH73115.1"/>
    <property type="status" value="JOINED"/>
    <property type="molecule type" value="Genomic_DNA"/>
</dbReference>
<dbReference type="EMBL" id="AL139404">
    <property type="protein sequence ID" value="CAH73116.1"/>
    <property type="molecule type" value="Genomic_DNA"/>
</dbReference>
<dbReference type="EMBL" id="AL390961">
    <property type="protein sequence ID" value="CAH73116.1"/>
    <property type="status" value="JOINED"/>
    <property type="molecule type" value="Genomic_DNA"/>
</dbReference>
<dbReference type="EMBL" id="AL139404">
    <property type="protein sequence ID" value="CAH73117.1"/>
    <property type="molecule type" value="Genomic_DNA"/>
</dbReference>
<dbReference type="EMBL" id="AL390961">
    <property type="protein sequence ID" value="CAH73117.1"/>
    <property type="status" value="JOINED"/>
    <property type="molecule type" value="Genomic_DNA"/>
</dbReference>
<dbReference type="EMBL" id="AL139404">
    <property type="protein sequence ID" value="CAH73118.1"/>
    <property type="molecule type" value="Genomic_DNA"/>
</dbReference>
<dbReference type="EMBL" id="AL390961">
    <property type="protein sequence ID" value="CAH73118.1"/>
    <property type="status" value="JOINED"/>
    <property type="molecule type" value="Genomic_DNA"/>
</dbReference>
<dbReference type="EMBL" id="AL139404">
    <property type="protein sequence ID" value="CAH73119.1"/>
    <property type="molecule type" value="Genomic_DNA"/>
</dbReference>
<dbReference type="EMBL" id="AL390961">
    <property type="protein sequence ID" value="CAH73119.1"/>
    <property type="status" value="JOINED"/>
    <property type="molecule type" value="Genomic_DNA"/>
</dbReference>
<dbReference type="EMBL" id="AL390961">
    <property type="protein sequence ID" value="CAI17272.1"/>
    <property type="molecule type" value="Genomic_DNA"/>
</dbReference>
<dbReference type="EMBL" id="AL139404">
    <property type="protein sequence ID" value="CAI17272.1"/>
    <property type="status" value="JOINED"/>
    <property type="molecule type" value="Genomic_DNA"/>
</dbReference>
<dbReference type="EMBL" id="AL390961">
    <property type="protein sequence ID" value="CAI17273.1"/>
    <property type="molecule type" value="Genomic_DNA"/>
</dbReference>
<dbReference type="EMBL" id="AL139404">
    <property type="protein sequence ID" value="CAI17273.1"/>
    <property type="status" value="JOINED"/>
    <property type="molecule type" value="Genomic_DNA"/>
</dbReference>
<dbReference type="EMBL" id="AL390961">
    <property type="protein sequence ID" value="CAI17274.1"/>
    <property type="molecule type" value="Genomic_DNA"/>
</dbReference>
<dbReference type="EMBL" id="AL139404">
    <property type="protein sequence ID" value="CAI17274.1"/>
    <property type="status" value="JOINED"/>
    <property type="molecule type" value="Genomic_DNA"/>
</dbReference>
<dbReference type="EMBL" id="AL390961">
    <property type="protein sequence ID" value="CAI17275.1"/>
    <property type="molecule type" value="Genomic_DNA"/>
</dbReference>
<dbReference type="EMBL" id="AL139404">
    <property type="protein sequence ID" value="CAI17275.1"/>
    <property type="status" value="JOINED"/>
    <property type="molecule type" value="Genomic_DNA"/>
</dbReference>
<dbReference type="EMBL" id="AL390961">
    <property type="protein sequence ID" value="CAI17276.1"/>
    <property type="molecule type" value="Genomic_DNA"/>
</dbReference>
<dbReference type="EMBL" id="AL139404">
    <property type="protein sequence ID" value="CAI17276.1"/>
    <property type="status" value="JOINED"/>
    <property type="molecule type" value="Genomic_DNA"/>
</dbReference>
<dbReference type="EMBL" id="AL390961">
    <property type="protein sequence ID" value="CAI17277.1"/>
    <property type="molecule type" value="Genomic_DNA"/>
</dbReference>
<dbReference type="EMBL" id="AL139404">
    <property type="protein sequence ID" value="CAI17277.1"/>
    <property type="status" value="JOINED"/>
    <property type="molecule type" value="Genomic_DNA"/>
</dbReference>
<dbReference type="EMBL" id="AL390961">
    <property type="protein sequence ID" value="CAI17278.1"/>
    <property type="molecule type" value="Genomic_DNA"/>
</dbReference>
<dbReference type="EMBL" id="AL139404">
    <property type="protein sequence ID" value="CAI17278.1"/>
    <property type="status" value="JOINED"/>
    <property type="molecule type" value="Genomic_DNA"/>
</dbReference>
<dbReference type="EMBL" id="AL390961">
    <property type="protein sequence ID" value="CAI17279.1"/>
    <property type="molecule type" value="Genomic_DNA"/>
</dbReference>
<dbReference type="EMBL" id="AL139404">
    <property type="protein sequence ID" value="CAI17279.1"/>
    <property type="status" value="JOINED"/>
    <property type="molecule type" value="Genomic_DNA"/>
</dbReference>
<dbReference type="EMBL" id="CH471072">
    <property type="protein sequence ID" value="EAW86079.1"/>
    <property type="molecule type" value="Genomic_DNA"/>
</dbReference>
<dbReference type="EMBL" id="CH471072">
    <property type="protein sequence ID" value="EAW86080.1"/>
    <property type="molecule type" value="Genomic_DNA"/>
</dbReference>
<dbReference type="EMBL" id="BC024254">
    <property type="protein sequence ID" value="AAH24254.1"/>
    <property type="molecule type" value="mRNA"/>
</dbReference>
<dbReference type="CCDS" id="CCDS31169.1">
    <molecule id="Q8IZP0-5"/>
</dbReference>
<dbReference type="CCDS" id="CCDS31170.1">
    <molecule id="Q8IZP0-3"/>
</dbReference>
<dbReference type="CCDS" id="CCDS31171.1">
    <molecule id="Q8IZP0-9"/>
</dbReference>
<dbReference type="CCDS" id="CCDS53497.1">
    <molecule id="Q8IZP0-11"/>
</dbReference>
<dbReference type="CCDS" id="CCDS53498.1">
    <molecule id="Q8IZP0-2"/>
</dbReference>
<dbReference type="CCDS" id="CCDS53499.1">
    <molecule id="Q8IZP0-4"/>
</dbReference>
<dbReference type="CCDS" id="CCDS53500.1">
    <molecule id="Q8IZP0-6"/>
</dbReference>
<dbReference type="CCDS" id="CCDS53501.1">
    <molecule id="Q8IZP0-12"/>
</dbReference>
<dbReference type="CCDS" id="CCDS7150.1">
    <molecule id="Q8IZP0-1"/>
</dbReference>
<dbReference type="CCDS" id="CCDS73077.1">
    <molecule id="Q8IZP0-8"/>
</dbReference>
<dbReference type="CCDS" id="CCDS73078.1">
    <molecule id="Q8IZP0-7"/>
</dbReference>
<dbReference type="RefSeq" id="NP_001012768.1">
    <molecule id="Q8IZP0-9"/>
    <property type="nucleotide sequence ID" value="NM_001012750.3"/>
</dbReference>
<dbReference type="RefSeq" id="NP_001012769.1">
    <molecule id="Q8IZP0-3"/>
    <property type="nucleotide sequence ID" value="NM_001012751.3"/>
</dbReference>
<dbReference type="RefSeq" id="NP_001012770.1">
    <molecule id="Q8IZP0-5"/>
    <property type="nucleotide sequence ID" value="NM_001012752.3"/>
</dbReference>
<dbReference type="RefSeq" id="NP_001171587.1">
    <molecule id="Q8IZP0-12"/>
    <property type="nucleotide sequence ID" value="NM_001178116.2"/>
</dbReference>
<dbReference type="RefSeq" id="NP_001171590.1">
    <molecule id="Q8IZP0-6"/>
    <property type="nucleotide sequence ID" value="NM_001178119.2"/>
</dbReference>
<dbReference type="RefSeq" id="NP_001171591.1">
    <molecule id="Q8IZP0-4"/>
    <property type="nucleotide sequence ID" value="NM_001178120.2"/>
</dbReference>
<dbReference type="RefSeq" id="NP_001171592.1">
    <molecule id="Q8IZP0-2"/>
    <property type="nucleotide sequence ID" value="NM_001178121.2"/>
</dbReference>
<dbReference type="RefSeq" id="NP_001171593.1">
    <molecule id="Q8IZP0-7"/>
    <property type="nucleotide sequence ID" value="NM_001178122.2"/>
</dbReference>
<dbReference type="RefSeq" id="NP_001171594.1">
    <property type="nucleotide sequence ID" value="NM_001178123.1"/>
</dbReference>
<dbReference type="RefSeq" id="NP_001171595.1">
    <molecule id="Q8IZP0-10"/>
    <property type="nucleotide sequence ID" value="NM_001178124.2"/>
</dbReference>
<dbReference type="RefSeq" id="NP_001171596.1">
    <molecule id="Q8IZP0-11"/>
    <property type="nucleotide sequence ID" value="NM_001178125.2"/>
</dbReference>
<dbReference type="RefSeq" id="NP_005461.2">
    <molecule id="Q8IZP0-1"/>
    <property type="nucleotide sequence ID" value="NM_005470.4"/>
</dbReference>
<dbReference type="PDB" id="7LXE">
    <property type="method" value="X-ray"/>
    <property type="resolution" value="1.88 A"/>
    <property type="chains" value="A=407-442"/>
</dbReference>
<dbReference type="PDBsum" id="7LXE"/>
<dbReference type="SMR" id="Q8IZP0"/>
<dbReference type="BioGRID" id="115324">
    <property type="interactions" value="228"/>
</dbReference>
<dbReference type="CORUM" id="Q8IZP0"/>
<dbReference type="DIP" id="DIP-31118N"/>
<dbReference type="ELM" id="Q8IZP0"/>
<dbReference type="FunCoup" id="Q8IZP0">
    <property type="interactions" value="2855"/>
</dbReference>
<dbReference type="IntAct" id="Q8IZP0">
    <property type="interactions" value="184"/>
</dbReference>
<dbReference type="MINT" id="Q8IZP0"/>
<dbReference type="STRING" id="9606.ENSP00000365312"/>
<dbReference type="GlyGen" id="Q8IZP0">
    <property type="glycosylation" value="3 sites, 1 N-linked glycan (1 site), 1 O-linked glycan (1 site)"/>
</dbReference>
<dbReference type="iPTMnet" id="Q8IZP0"/>
<dbReference type="PhosphoSitePlus" id="Q8IZP0"/>
<dbReference type="SwissPalm" id="Q8IZP0"/>
<dbReference type="BioMuta" id="ABI1"/>
<dbReference type="DMDM" id="50400546"/>
<dbReference type="jPOST" id="Q8IZP0"/>
<dbReference type="MassIVE" id="Q8IZP0"/>
<dbReference type="PaxDb" id="9606-ENSP00000365312"/>
<dbReference type="PeptideAtlas" id="Q8IZP0"/>
<dbReference type="PRIDE" id="Q8IZP0"/>
<dbReference type="ProteomicsDB" id="43294"/>
<dbReference type="ProteomicsDB" id="71380">
    <molecule id="Q8IZP0-1"/>
</dbReference>
<dbReference type="ProteomicsDB" id="71381">
    <molecule id="Q8IZP0-10"/>
</dbReference>
<dbReference type="ProteomicsDB" id="71382">
    <molecule id="Q8IZP0-11"/>
</dbReference>
<dbReference type="ProteomicsDB" id="71383">
    <molecule id="Q8IZP0-2"/>
</dbReference>
<dbReference type="ProteomicsDB" id="71384">
    <molecule id="Q8IZP0-3"/>
</dbReference>
<dbReference type="ProteomicsDB" id="71385">
    <molecule id="Q8IZP0-4"/>
</dbReference>
<dbReference type="ProteomicsDB" id="71386">
    <molecule id="Q8IZP0-5"/>
</dbReference>
<dbReference type="ProteomicsDB" id="71387">
    <molecule id="Q8IZP0-6"/>
</dbReference>
<dbReference type="ProteomicsDB" id="71388">
    <molecule id="Q8IZP0-7"/>
</dbReference>
<dbReference type="ProteomicsDB" id="71389">
    <molecule id="Q8IZP0-8"/>
</dbReference>
<dbReference type="ProteomicsDB" id="71390">
    <molecule id="Q8IZP0-9"/>
</dbReference>
<dbReference type="Pumba" id="Q8IZP0"/>
<dbReference type="Antibodypedia" id="3646">
    <property type="antibodies" value="355 antibodies from 40 providers"/>
</dbReference>
<dbReference type="DNASU" id="10006"/>
<dbReference type="Ensembl" id="ENST00000346832.10">
    <molecule id="Q8IZP0-12"/>
    <property type="protein sequence ID" value="ENSP00000279599.8"/>
    <property type="gene ID" value="ENSG00000136754.18"/>
</dbReference>
<dbReference type="Ensembl" id="ENST00000359188.8">
    <molecule id="Q8IZP0-6"/>
    <property type="protein sequence ID" value="ENSP00000352114.4"/>
    <property type="gene ID" value="ENSG00000136754.18"/>
</dbReference>
<dbReference type="Ensembl" id="ENST00000376137.9">
    <molecule id="Q8IZP0-7"/>
    <property type="protein sequence ID" value="ENSP00000365307.5"/>
    <property type="gene ID" value="ENSG00000136754.18"/>
</dbReference>
<dbReference type="Ensembl" id="ENST00000376138.7">
    <molecule id="Q8IZP0-3"/>
    <property type="protein sequence ID" value="ENSP00000365308.3"/>
    <property type="gene ID" value="ENSG00000136754.18"/>
</dbReference>
<dbReference type="Ensembl" id="ENST00000376139.6">
    <molecule id="Q8IZP0-5"/>
    <property type="protein sequence ID" value="ENSP00000365309.2"/>
    <property type="gene ID" value="ENSG00000136754.18"/>
</dbReference>
<dbReference type="Ensembl" id="ENST00000376140.4">
    <molecule id="Q8IZP0-9"/>
    <property type="protein sequence ID" value="ENSP00000365310.3"/>
    <property type="gene ID" value="ENSG00000136754.18"/>
</dbReference>
<dbReference type="Ensembl" id="ENST00000376142.6">
    <molecule id="Q8IZP0-1"/>
    <property type="protein sequence ID" value="ENSP00000365312.2"/>
    <property type="gene ID" value="ENSG00000136754.18"/>
</dbReference>
<dbReference type="Ensembl" id="ENST00000376166.5">
    <molecule id="Q8IZP0-2"/>
    <property type="protein sequence ID" value="ENSP00000365336.1"/>
    <property type="gene ID" value="ENSG00000136754.18"/>
</dbReference>
<dbReference type="Ensembl" id="ENST00000376170.8">
    <molecule id="Q8IZP0-4"/>
    <property type="protein sequence ID" value="ENSP00000365340.4"/>
    <property type="gene ID" value="ENSG00000136754.18"/>
</dbReference>
<dbReference type="Ensembl" id="ENST00000490841.7">
    <molecule id="Q8IZP0-11"/>
    <property type="protein sequence ID" value="ENSP00000440101.1"/>
    <property type="gene ID" value="ENSG00000136754.18"/>
</dbReference>
<dbReference type="GeneID" id="10006"/>
<dbReference type="KEGG" id="hsa:10006"/>
<dbReference type="MANE-Select" id="ENST00000376140.4">
    <molecule id="Q8IZP0-9"/>
    <property type="protein sequence ID" value="ENSP00000365310.3"/>
    <property type="RefSeq nucleotide sequence ID" value="NM_001012750.3"/>
    <property type="RefSeq protein sequence ID" value="NP_001012768.1"/>
</dbReference>
<dbReference type="UCSC" id="uc001isx.4">
    <molecule id="Q8IZP0-1"/>
    <property type="organism name" value="human"/>
</dbReference>
<dbReference type="AGR" id="HGNC:11320"/>
<dbReference type="CTD" id="10006"/>
<dbReference type="DisGeNET" id="10006"/>
<dbReference type="GeneCards" id="ABI1"/>
<dbReference type="HGNC" id="HGNC:11320">
    <property type="gene designation" value="ABI1"/>
</dbReference>
<dbReference type="HPA" id="ENSG00000136754">
    <property type="expression patterns" value="Low tissue specificity"/>
</dbReference>
<dbReference type="MIM" id="603050">
    <property type="type" value="gene"/>
</dbReference>
<dbReference type="neXtProt" id="NX_Q8IZP0"/>
<dbReference type="OpenTargets" id="ENSG00000136754"/>
<dbReference type="PharmGKB" id="PA36144"/>
<dbReference type="VEuPathDB" id="HostDB:ENSG00000136754"/>
<dbReference type="eggNOG" id="KOG2546">
    <property type="taxonomic scope" value="Eukaryota"/>
</dbReference>
<dbReference type="GeneTree" id="ENSGT00940000154811"/>
<dbReference type="InParanoid" id="Q8IZP0"/>
<dbReference type="OMA" id="HGVKEWH"/>
<dbReference type="OrthoDB" id="2159336at2759"/>
<dbReference type="PAN-GO" id="Q8IZP0">
    <property type="GO annotations" value="3 GO annotations based on evolutionary models"/>
</dbReference>
<dbReference type="PhylomeDB" id="Q8IZP0"/>
<dbReference type="TreeFam" id="TF314303"/>
<dbReference type="PathwayCommons" id="Q8IZP0"/>
<dbReference type="Reactome" id="R-HSA-2029482">
    <property type="pathway name" value="Regulation of actin dynamics for phagocytic cup formation"/>
</dbReference>
<dbReference type="Reactome" id="R-HSA-4420097">
    <property type="pathway name" value="VEGFA-VEGFR2 Pathway"/>
</dbReference>
<dbReference type="Reactome" id="R-HSA-5663213">
    <property type="pathway name" value="RHO GTPases Activate WASPs and WAVEs"/>
</dbReference>
<dbReference type="Reactome" id="R-HSA-9013149">
    <property type="pathway name" value="RAC1 GTPase cycle"/>
</dbReference>
<dbReference type="Reactome" id="R-HSA-9013404">
    <property type="pathway name" value="RAC2 GTPase cycle"/>
</dbReference>
<dbReference type="Reactome" id="R-HSA-9013423">
    <property type="pathway name" value="RAC3 GTPase cycle"/>
</dbReference>
<dbReference type="Reactome" id="R-HSA-9664422">
    <property type="pathway name" value="FCGR3A-mediated phagocytosis"/>
</dbReference>
<dbReference type="SignaLink" id="Q8IZP0"/>
<dbReference type="SIGNOR" id="Q8IZP0"/>
<dbReference type="BioGRID-ORCS" id="10006">
    <property type="hits" value="37 hits in 1163 CRISPR screens"/>
</dbReference>
<dbReference type="CD-CODE" id="FB4E32DD">
    <property type="entry name" value="Presynaptic clusters and postsynaptic densities"/>
</dbReference>
<dbReference type="ChiTaRS" id="ABI1">
    <property type="organism name" value="human"/>
</dbReference>
<dbReference type="GeneWiki" id="ABI1"/>
<dbReference type="GenomeRNAi" id="10006"/>
<dbReference type="Pharos" id="Q8IZP0">
    <property type="development level" value="Tbio"/>
</dbReference>
<dbReference type="PRO" id="PR:Q8IZP0"/>
<dbReference type="Proteomes" id="UP000005640">
    <property type="component" value="Chromosome 10"/>
</dbReference>
<dbReference type="RNAct" id="Q8IZP0">
    <property type="molecule type" value="protein"/>
</dbReference>
<dbReference type="Bgee" id="ENSG00000136754">
    <property type="expression patterns" value="Expressed in epithelium of nasopharynx and 206 other cell types or tissues"/>
</dbReference>
<dbReference type="ExpressionAtlas" id="Q8IZP0">
    <property type="expression patterns" value="baseline and differential"/>
</dbReference>
<dbReference type="GO" id="GO:0098858">
    <property type="term" value="C:actin-based cell projection"/>
    <property type="evidence" value="ECO:0000318"/>
    <property type="project" value="GO_Central"/>
</dbReference>
<dbReference type="GO" id="GO:0005856">
    <property type="term" value="C:cytoskeleton"/>
    <property type="evidence" value="ECO:0007669"/>
    <property type="project" value="UniProtKB-SubCell"/>
</dbReference>
<dbReference type="GO" id="GO:0005829">
    <property type="term" value="C:cytosol"/>
    <property type="evidence" value="ECO:0000304"/>
    <property type="project" value="Reactome"/>
</dbReference>
<dbReference type="GO" id="GO:0005783">
    <property type="term" value="C:endoplasmic reticulum"/>
    <property type="evidence" value="ECO:0000304"/>
    <property type="project" value="ProtInc"/>
</dbReference>
<dbReference type="GO" id="GO:0070062">
    <property type="term" value="C:extracellular exosome"/>
    <property type="evidence" value="ECO:0007005"/>
    <property type="project" value="UniProtKB"/>
</dbReference>
<dbReference type="GO" id="GO:0032433">
    <property type="term" value="C:filopodium tip"/>
    <property type="evidence" value="ECO:0000314"/>
    <property type="project" value="UniProtKB"/>
</dbReference>
<dbReference type="GO" id="GO:0030426">
    <property type="term" value="C:growth cone"/>
    <property type="evidence" value="ECO:0007669"/>
    <property type="project" value="UniProtKB-SubCell"/>
</dbReference>
<dbReference type="GO" id="GO:0030027">
    <property type="term" value="C:lamellipodium"/>
    <property type="evidence" value="ECO:0000314"/>
    <property type="project" value="UniProtKB"/>
</dbReference>
<dbReference type="GO" id="GO:0005634">
    <property type="term" value="C:nucleus"/>
    <property type="evidence" value="ECO:0007669"/>
    <property type="project" value="UniProtKB-SubCell"/>
</dbReference>
<dbReference type="GO" id="GO:0014069">
    <property type="term" value="C:postsynaptic density"/>
    <property type="evidence" value="ECO:0007669"/>
    <property type="project" value="UniProtKB-SubCell"/>
</dbReference>
<dbReference type="GO" id="GO:0031209">
    <property type="term" value="C:SCAR complex"/>
    <property type="evidence" value="ECO:0000314"/>
    <property type="project" value="UniProtKB"/>
</dbReference>
<dbReference type="GO" id="GO:0045296">
    <property type="term" value="F:cadherin binding"/>
    <property type="evidence" value="ECO:0007005"/>
    <property type="project" value="BHF-UCL"/>
</dbReference>
<dbReference type="GO" id="GO:0008092">
    <property type="term" value="F:cytoskeletal protein binding"/>
    <property type="evidence" value="ECO:0000304"/>
    <property type="project" value="ProtInc"/>
</dbReference>
<dbReference type="GO" id="GO:0030296">
    <property type="term" value="F:protein tyrosine kinase activator activity"/>
    <property type="evidence" value="ECO:0000250"/>
    <property type="project" value="ARUK-UCL"/>
</dbReference>
<dbReference type="GO" id="GO:0017124">
    <property type="term" value="F:SH3 domain binding"/>
    <property type="evidence" value="ECO:0000353"/>
    <property type="project" value="UniProtKB"/>
</dbReference>
<dbReference type="GO" id="GO:0035591">
    <property type="term" value="F:signaling adaptor activity"/>
    <property type="evidence" value="ECO:0000314"/>
    <property type="project" value="ARUK-UCL"/>
</dbReference>
<dbReference type="GO" id="GO:0008154">
    <property type="term" value="P:actin polymerization or depolymerization"/>
    <property type="evidence" value="ECO:0000303"/>
    <property type="project" value="UniProtKB"/>
</dbReference>
<dbReference type="GO" id="GO:0048858">
    <property type="term" value="P:cell projection morphogenesis"/>
    <property type="evidence" value="ECO:0000318"/>
    <property type="project" value="GO_Central"/>
</dbReference>
<dbReference type="GO" id="GO:0007169">
    <property type="term" value="P:cell surface receptor protein tyrosine kinase signaling pathway"/>
    <property type="evidence" value="ECO:0000304"/>
    <property type="project" value="ProtInc"/>
</dbReference>
<dbReference type="GO" id="GO:0048813">
    <property type="term" value="P:dendrite morphogenesis"/>
    <property type="evidence" value="ECO:0007669"/>
    <property type="project" value="Ensembl"/>
</dbReference>
<dbReference type="GO" id="GO:0072673">
    <property type="term" value="P:lamellipodium morphogenesis"/>
    <property type="evidence" value="ECO:0007669"/>
    <property type="project" value="Ensembl"/>
</dbReference>
<dbReference type="GO" id="GO:0035855">
    <property type="term" value="P:megakaryocyte development"/>
    <property type="evidence" value="ECO:0007669"/>
    <property type="project" value="Ensembl"/>
</dbReference>
<dbReference type="GO" id="GO:0008285">
    <property type="term" value="P:negative regulation of cell population proliferation"/>
    <property type="evidence" value="ECO:0000304"/>
    <property type="project" value="ProtInc"/>
</dbReference>
<dbReference type="GO" id="GO:0001764">
    <property type="term" value="P:neuron migration"/>
    <property type="evidence" value="ECO:0000318"/>
    <property type="project" value="GO_Central"/>
</dbReference>
<dbReference type="GO" id="GO:0061098">
    <property type="term" value="P:positive regulation of protein tyrosine kinase activity"/>
    <property type="evidence" value="ECO:0000314"/>
    <property type="project" value="MGI"/>
</dbReference>
<dbReference type="GO" id="GO:0001756">
    <property type="term" value="P:somitogenesis"/>
    <property type="evidence" value="ECO:0007669"/>
    <property type="project" value="Ensembl"/>
</dbReference>
<dbReference type="CDD" id="cd11971">
    <property type="entry name" value="SH3_Abi1"/>
    <property type="match status" value="1"/>
</dbReference>
<dbReference type="FunFam" id="2.30.30.40:FF:000002">
    <property type="entry name" value="abl interactor 1 isoform X1"/>
    <property type="match status" value="1"/>
</dbReference>
<dbReference type="Gene3D" id="6.10.140.1620">
    <property type="match status" value="1"/>
</dbReference>
<dbReference type="Gene3D" id="2.30.30.40">
    <property type="entry name" value="SH3 Domains"/>
    <property type="match status" value="1"/>
</dbReference>
<dbReference type="InterPro" id="IPR028457">
    <property type="entry name" value="ABI"/>
</dbReference>
<dbReference type="InterPro" id="IPR035725">
    <property type="entry name" value="Abi1_SH3"/>
</dbReference>
<dbReference type="InterPro" id="IPR012849">
    <property type="entry name" value="Abl-interactor_HHR_dom"/>
</dbReference>
<dbReference type="InterPro" id="IPR036028">
    <property type="entry name" value="SH3-like_dom_sf"/>
</dbReference>
<dbReference type="InterPro" id="IPR001452">
    <property type="entry name" value="SH3_domain"/>
</dbReference>
<dbReference type="InterPro" id="IPR000727">
    <property type="entry name" value="T_SNARE_dom"/>
</dbReference>
<dbReference type="PANTHER" id="PTHR10460:SF2">
    <property type="entry name" value="ABL INTERACTOR 1"/>
    <property type="match status" value="1"/>
</dbReference>
<dbReference type="PANTHER" id="PTHR10460">
    <property type="entry name" value="ABL INTERACTOR FAMILY MEMBER"/>
    <property type="match status" value="1"/>
</dbReference>
<dbReference type="Pfam" id="PF07815">
    <property type="entry name" value="Abi_HHR"/>
    <property type="match status" value="1"/>
</dbReference>
<dbReference type="Pfam" id="PF00018">
    <property type="entry name" value="SH3_1"/>
    <property type="match status" value="1"/>
</dbReference>
<dbReference type="PRINTS" id="PR00499">
    <property type="entry name" value="P67PHOX"/>
</dbReference>
<dbReference type="PRINTS" id="PR00452">
    <property type="entry name" value="SH3DOMAIN"/>
</dbReference>
<dbReference type="SMART" id="SM00326">
    <property type="entry name" value="SH3"/>
    <property type="match status" value="1"/>
</dbReference>
<dbReference type="SUPFAM" id="SSF50044">
    <property type="entry name" value="SH3-domain"/>
    <property type="match status" value="1"/>
</dbReference>
<dbReference type="PROSITE" id="PS50002">
    <property type="entry name" value="SH3"/>
    <property type="match status" value="1"/>
</dbReference>
<dbReference type="PROSITE" id="PS50192">
    <property type="entry name" value="T_SNARE"/>
    <property type="match status" value="1"/>
</dbReference>
<comment type="function">
    <text evidence="7 12">May act in negative regulation of cell growth and transformation by interacting with nonreceptor tyrosine kinases ABL1 and/or ABL2. May play a role in regulation of EGF-induced Erk pathway activation. Involved in cytoskeletal reorganization and EGFR signaling. Together with EPS8 participates in transduction of signals from Ras to Rac. In vitro, a trimeric complex of ABI1, EPS8 and SOS1 exhibits Rac specific guanine nucleotide exchange factor (GEF) activity and ABI1 seems to act as an adapter in the complex. Regulates ABL1/c-Abl-mediated phosphorylation of ENAH. Recruits WASF1 to lamellipodia and there seems to regulate WASF1 protein level. In brain, seems to regulate the dendritic outgrowth and branching as well as to determine the shape and number of synaptic contacts of developing neurons.</text>
</comment>
<comment type="subunit">
    <text evidence="1 7 8 10 11 13 15 16">Interacts with ABL1, ENAH, STX1A, SNAP25, VAMP2, EPS8, and through its N-terminus with WASF1. Part of a complex consisting of ABI1, STX1A and SNAP25. Part of a complex consisting of ABI1, EPS8 and SOS1 (By similarity). Interacts with SOS1, SOS2, GRB2, SPTA1 and the first SH3 domain of NCK1. Isoform 6 does not interact with NCK1. Component of the WAVE2 complex composed of ABI1, CYFIP1/SRA1, NCKAP1/NAP1 (NCKAP1l/HEM1 in hematopoietic cells) and WASF2/WAVE2 (PubMed:16417406). Interacts (via SH3 domain) with SHANK2 and SHANK3, but not SHANK1; the interaction is direct. Interacts with the heterodimer MYC:MAX; the interaction may enhance MYC:MAX transcriptional activity. Interacts with FNBP1L (via the SH3 domain), WASF2, and CDC42, but only in the presence of FNBP1L (PubMed:19798448).</text>
</comment>
<comment type="subunit">
    <text evidence="14">(Microbial infection) Interacts with human cytomegalovirus/HHV-5 protein UL135.</text>
</comment>
<comment type="interaction">
    <interactant intactId="EBI-375446">
        <id>Q8IZP0</id>
    </interactant>
    <interactant intactId="EBI-375543">
        <id>P00519</id>
        <label>ABL1</label>
    </interactant>
    <organismsDiffer>false</organismsDiffer>
    <experiments>11</experiments>
</comment>
<comment type="interaction">
    <interactant intactId="EBI-375446">
        <id>Q8IZP0</id>
    </interactant>
    <interactant intactId="EBI-1102694">
        <id>P42684</id>
        <label>ABL2</label>
    </interactant>
    <organismsDiffer>false</organismsDiffer>
    <experiments>2</experiments>
</comment>
<comment type="interaction">
    <interactant intactId="EBI-375446">
        <id>Q8IZP0</id>
    </interactant>
    <interactant intactId="EBI-525456">
        <id>Q9UQB8</id>
        <label>BAIAP2</label>
    </interactant>
    <organismsDiffer>false</organismsDiffer>
    <experiments>4</experiments>
</comment>
<comment type="interaction">
    <interactant intactId="EBI-375446">
        <id>Q8IZP0</id>
    </interactant>
    <interactant intactId="EBI-766279">
        <id>O00555</id>
        <label>CACNA1A</label>
    </interactant>
    <organismsDiffer>false</organismsDiffer>
    <experiments>2</experiments>
</comment>
<comment type="interaction">
    <interactant intactId="EBI-375446">
        <id>Q8IZP0</id>
    </interactant>
    <interactant intactId="EBI-744027">
        <id>Q13191</id>
        <label>CBLB</label>
    </interactant>
    <organismsDiffer>false</organismsDiffer>
    <experiments>2</experiments>
</comment>
<comment type="interaction">
    <interactant intactId="EBI-375446">
        <id>Q8IZP0</id>
    </interactant>
    <interactant intactId="EBI-395044">
        <id>P14598</id>
        <label>NCF1</label>
    </interactant>
    <organismsDiffer>false</organismsDiffer>
    <experiments>5</experiments>
</comment>
<comment type="interaction">
    <interactant intactId="EBI-375446">
        <id>Q8IZP0</id>
    </interactant>
    <interactant intactId="EBI-389883">
        <id>P16333</id>
        <label>NCK1</label>
    </interactant>
    <organismsDiffer>false</organismsDiffer>
    <experiments>2</experiments>
</comment>
<comment type="interaction">
    <interactant intactId="EBI-375446">
        <id>Q8IZP0</id>
    </interactant>
    <interactant intactId="EBI-389845">
        <id>Q9Y2A7</id>
        <label>NCKAP1</label>
    </interactant>
    <organismsDiffer>false</organismsDiffer>
    <experiments>8</experiments>
</comment>
<comment type="interaction">
    <interactant intactId="EBI-375446">
        <id>Q8IZP0</id>
    </interactant>
    <interactant intactId="EBI-79464">
        <id>P27986</id>
        <label>PIK3R1</label>
    </interactant>
    <organismsDiffer>false</organismsDiffer>
    <experiments>8</experiments>
</comment>
<comment type="interaction">
    <interactant intactId="EBI-375446">
        <id>Q8IZP0</id>
    </interactant>
    <interactant intactId="EBI-79893">
        <id>Q92569</id>
        <label>PIK3R3</label>
    </interactant>
    <organismsDiffer>false</organismsDiffer>
    <experiments>2</experiments>
</comment>
<comment type="interaction">
    <interactant intactId="EBI-375446">
        <id>Q8IZP0</id>
    </interactant>
    <interactant intactId="EBI-1026476">
        <id>P20936</id>
        <label>RASA1</label>
    </interactant>
    <organismsDiffer>false</organismsDiffer>
    <experiments>2</experiments>
</comment>
<comment type="interaction">
    <interactant intactId="EBI-375446">
        <id>Q8IZP0</id>
    </interactant>
    <interactant intactId="EBI-1539606">
        <id>O14512</id>
        <label>SOCS7</label>
    </interactant>
    <organismsDiffer>false</organismsDiffer>
    <experiments>2</experiments>
</comment>
<comment type="interaction">
    <interactant intactId="EBI-375446">
        <id>Q8IZP0</id>
    </interactant>
    <interactant intactId="EBI-375617">
        <id>P02549</id>
        <label>SPTA1</label>
    </interactant>
    <organismsDiffer>false</organismsDiffer>
    <experiments>2</experiments>
</comment>
<comment type="interaction">
    <interactant intactId="EBI-375446">
        <id>Q8IZP0</id>
    </interactant>
    <interactant intactId="EBI-625518">
        <id>P15498</id>
        <label>VAV1</label>
    </interactant>
    <organismsDiffer>false</organismsDiffer>
    <experiments>2</experiments>
</comment>
<comment type="interaction">
    <interactant intactId="EBI-375446">
        <id>Q8IZP0</id>
    </interactant>
    <interactant intactId="EBI-297549">
        <id>P52735</id>
        <label>VAV2</label>
    </interactant>
    <organismsDiffer>false</organismsDiffer>
    <experiments>2</experiments>
</comment>
<comment type="interaction">
    <interactant intactId="EBI-375446">
        <id>Q8IZP0</id>
    </interactant>
    <interactant intactId="EBI-375596">
        <id>Q08509</id>
        <label>Eps8</label>
    </interactant>
    <organismsDiffer>true</organismsDiffer>
    <experiments>2</experiments>
</comment>
<comment type="interaction">
    <interactant intactId="EBI-375446">
        <id>Q8IZP0</id>
    </interactant>
    <interactant intactId="EBI-641764">
        <id>P26450</id>
        <label>Pik3r1</label>
    </interactant>
    <organismsDiffer>true</organismsDiffer>
    <experiments>3</experiments>
</comment>
<comment type="interaction">
    <interactant intactId="EBI-7358775">
        <id>Q8IZP0-2</id>
    </interactant>
    <interactant intactId="EBI-518228">
        <id>P22681</id>
        <label>CBL</label>
    </interactant>
    <organismsDiffer>false</organismsDiffer>
    <experiments>3</experiments>
</comment>
<comment type="interaction">
    <interactant intactId="EBI-7358775">
        <id>Q8IZP0-2</id>
    </interactant>
    <interactant intactId="EBI-703044">
        <id>P13612</id>
        <label>ITGA4</label>
    </interactant>
    <organismsDiffer>false</organismsDiffer>
    <experiments>2</experiments>
</comment>
<comment type="interaction">
    <interactant intactId="EBI-8593095">
        <id>Q8IZP0-4</id>
    </interactant>
    <interactant intactId="EBI-8593082">
        <id>P00520-4</id>
        <label>Abl1</label>
    </interactant>
    <organismsDiffer>true</organismsDiffer>
    <experiments>5</experiments>
</comment>
<comment type="interaction">
    <interactant intactId="EBI-11743294">
        <id>Q8IZP0-5</id>
    </interactant>
    <interactant intactId="EBI-11096309">
        <id>Q9NYB9-2</id>
        <label>ABI2</label>
    </interactant>
    <organismsDiffer>false</organismsDiffer>
    <experiments>3</experiments>
</comment>
<comment type="interaction">
    <interactant intactId="EBI-11743294">
        <id>Q8IZP0-5</id>
    </interactant>
    <interactant intactId="EBI-12030460">
        <id>Q8WYQ4-2</id>
        <label>C22orf15</label>
    </interactant>
    <organismsDiffer>false</organismsDiffer>
    <experiments>3</experiments>
</comment>
<comment type="interaction">
    <interactant intactId="EBI-11743294">
        <id>Q8IZP0-5</id>
    </interactant>
    <interactant intactId="EBI-10961624">
        <id>Q2TAC2-2</id>
        <label>CCDC57</label>
    </interactant>
    <organismsDiffer>false</organismsDiffer>
    <experiments>3</experiments>
</comment>
<comment type="interaction">
    <interactant intactId="EBI-11743294">
        <id>Q8IZP0-5</id>
    </interactant>
    <interactant intactId="EBI-10175300">
        <id>Q8TD31-3</id>
        <label>CCHCR1</label>
    </interactant>
    <organismsDiffer>false</organismsDiffer>
    <experiments>5</experiments>
</comment>
<comment type="interaction">
    <interactant intactId="EBI-11743294">
        <id>Q8IZP0-5</id>
    </interactant>
    <interactant intactId="EBI-11984733">
        <id>O60941-5</id>
        <label>DTNB</label>
    </interactant>
    <organismsDiffer>false</organismsDiffer>
    <experiments>3</experiments>
</comment>
<comment type="interaction">
    <interactant intactId="EBI-11743294">
        <id>Q8IZP0-5</id>
    </interactant>
    <interactant intactId="EBI-709735">
        <id>O15372</id>
        <label>EIF3H</label>
    </interactant>
    <organismsDiffer>false</organismsDiffer>
    <experiments>3</experiments>
</comment>
<comment type="interaction">
    <interactant intactId="EBI-11743294">
        <id>Q8IZP0-5</id>
    </interactant>
    <interactant intactId="EBI-744099">
        <id>Q9H0I2</id>
        <label>ENKD1</label>
    </interactant>
    <organismsDiffer>false</organismsDiffer>
    <experiments>3</experiments>
</comment>
<comment type="interaction">
    <interactant intactId="EBI-11743294">
        <id>Q8IZP0-5</id>
    </interactant>
    <interactant intactId="EBI-11986315">
        <id>Q9H5Z6-2</id>
        <label>FAM124B</label>
    </interactant>
    <organismsDiffer>false</organismsDiffer>
    <experiments>3</experiments>
</comment>
<comment type="interaction">
    <interactant intactId="EBI-11743294">
        <id>Q8IZP0-5</id>
    </interactant>
    <interactant intactId="EBI-11959077">
        <id>Q6PCT2-2</id>
        <label>FBXL19</label>
    </interactant>
    <organismsDiffer>false</organismsDiffer>
    <experiments>3</experiments>
</comment>
<comment type="interaction">
    <interactant intactId="EBI-11743294">
        <id>Q8IZP0-5</id>
    </interactant>
    <interactant intactId="EBI-701903">
        <id>Q14192</id>
        <label>FHL2</label>
    </interactant>
    <organismsDiffer>false</organismsDiffer>
    <experiments>3</experiments>
</comment>
<comment type="interaction">
    <interactant intactId="EBI-11743294">
        <id>Q8IZP0-5</id>
    </interactant>
    <interactant intactId="EBI-747421">
        <id>Q03014</id>
        <label>HHEX</label>
    </interactant>
    <organismsDiffer>false</organismsDiffer>
    <experiments>3</experiments>
</comment>
<comment type="interaction">
    <interactant intactId="EBI-11743294">
        <id>Q8IZP0-5</id>
    </interactant>
    <interactant intactId="EBI-7060731">
        <id>P61978-2</id>
        <label>HNRNPK</label>
    </interactant>
    <organismsDiffer>false</organismsDiffer>
    <experiments>3</experiments>
</comment>
<comment type="interaction">
    <interactant intactId="EBI-11743294">
        <id>Q8IZP0-5</id>
    </interactant>
    <interactant intactId="EBI-746815">
        <id>Q86YM7</id>
        <label>HOMER1</label>
    </interactant>
    <organismsDiffer>false</organismsDiffer>
    <experiments>3</experiments>
</comment>
<comment type="interaction">
    <interactant intactId="EBI-11743294">
        <id>Q8IZP0-5</id>
    </interactant>
    <interactant intactId="EBI-748420">
        <id>Q9NSC5</id>
        <label>HOMER3</label>
    </interactant>
    <organismsDiffer>false</organismsDiffer>
    <experiments>3</experiments>
</comment>
<comment type="interaction">
    <interactant intactId="EBI-11743294">
        <id>Q8IZP0-5</id>
    </interactant>
    <interactant intactId="EBI-10188326">
        <id>Q5T5P2-6</id>
        <label>KIAA1217</label>
    </interactant>
    <organismsDiffer>false</organismsDiffer>
    <experiments>3</experiments>
</comment>
<comment type="interaction">
    <interactant intactId="EBI-11743294">
        <id>Q8IZP0-5</id>
    </interactant>
    <interactant intactId="EBI-8639312">
        <id>P25800</id>
        <label>LMO1</label>
    </interactant>
    <organismsDiffer>false</organismsDiffer>
    <experiments>3</experiments>
</comment>
<comment type="interaction">
    <interactant intactId="EBI-11743294">
        <id>Q8IZP0-5</id>
    </interactant>
    <interactant intactId="EBI-6659161">
        <id>Q9Y586</id>
        <label>MAB21L2</label>
    </interactant>
    <organismsDiffer>false</organismsDiffer>
    <experiments>3</experiments>
</comment>
<comment type="interaction">
    <interactant intactId="EBI-11743294">
        <id>Q8IZP0-5</id>
    </interactant>
    <interactant intactId="EBI-12035911">
        <id>O94856-3</id>
        <label>NFASC</label>
    </interactant>
    <organismsDiffer>false</organismsDiffer>
    <experiments>3</experiments>
</comment>
<comment type="interaction">
    <interactant intactId="EBI-11743294">
        <id>Q8IZP0-5</id>
    </interactant>
    <interactant intactId="EBI-2859639">
        <id>Q5HYW2</id>
        <label>NHSL2</label>
    </interactant>
    <organismsDiffer>false</organismsDiffer>
    <experiments>3</experiments>
</comment>
<comment type="interaction">
    <interactant intactId="EBI-11743294">
        <id>Q8IZP0-5</id>
    </interactant>
    <interactant intactId="EBI-1383852">
        <id>P54646</id>
        <label>PRKAA2</label>
    </interactant>
    <organismsDiffer>false</organismsDiffer>
    <experiments>3</experiments>
</comment>
<comment type="interaction">
    <interactant intactId="EBI-11743294">
        <id>Q8IZP0-5</id>
    </interactant>
    <interactant intactId="EBI-12041043">
        <id>Q96T37-3</id>
        <label>RBM15</label>
    </interactant>
    <organismsDiffer>false</organismsDiffer>
    <experiments>3</experiments>
</comment>
<comment type="interaction">
    <interactant intactId="EBI-11743294">
        <id>Q8IZP0-5</id>
    </interactant>
    <interactant intactId="EBI-1504830">
        <id>Q9P2K3-2</id>
        <label>RCOR3</label>
    </interactant>
    <organismsDiffer>false</organismsDiffer>
    <experiments>3</experiments>
</comment>
<comment type="interaction">
    <interactant intactId="EBI-11743294">
        <id>Q8IZP0-5</id>
    </interactant>
    <interactant intactId="EBI-358489">
        <id>Q96GM5</id>
        <label>SMARCD1</label>
    </interactant>
    <organismsDiffer>false</organismsDiffer>
    <experiments>3</experiments>
</comment>
<comment type="interaction">
    <interactant intactId="EBI-11743294">
        <id>Q8IZP0-5</id>
    </interactant>
    <interactant intactId="EBI-12037893">
        <id>O94875-10</id>
        <label>SORBS2</label>
    </interactant>
    <organismsDiffer>false</organismsDiffer>
    <experiments>3</experiments>
</comment>
<comment type="interaction">
    <interactant intactId="EBI-11743294">
        <id>Q8IZP0-5</id>
    </interactant>
    <interactant intactId="EBI-6550597">
        <id>Q15642-2</id>
        <label>TRIP10</label>
    </interactant>
    <organismsDiffer>false</organismsDiffer>
    <experiments>3</experiments>
</comment>
<comment type="interaction">
    <interactant intactId="EBI-11743294">
        <id>Q8IZP0-5</id>
    </interactant>
    <interactant intactId="EBI-9090990">
        <id>Q5W5X9-3</id>
        <label>TTC23</label>
    </interactant>
    <organismsDiffer>false</organismsDiffer>
    <experiments>3</experiments>
</comment>
<comment type="interaction">
    <interactant intactId="EBI-11743294">
        <id>Q8IZP0-5</id>
    </interactant>
    <interactant intactId="EBI-2116622">
        <id>Q5ST30</id>
        <label>VARS2</label>
    </interactant>
    <organismsDiffer>false</organismsDiffer>
    <experiments>3</experiments>
</comment>
<comment type="interaction">
    <interactant intactId="EBI-11743294">
        <id>Q8IZP0-5</id>
    </interactant>
    <interactant intactId="EBI-748201">
        <id>P50552</id>
        <label>VASP</label>
    </interactant>
    <organismsDiffer>false</organismsDiffer>
    <experiments>3</experiments>
</comment>
<comment type="subcellular location">
    <subcellularLocation>
        <location evidence="1">Cytoplasm</location>
    </subcellularLocation>
    <subcellularLocation>
        <location evidence="1">Nucleus</location>
    </subcellularLocation>
    <subcellularLocation>
        <location evidence="1">Cell projection</location>
        <location evidence="1">Lamellipodium</location>
    </subcellularLocation>
    <subcellularLocation>
        <location evidence="1">Cell projection</location>
        <location evidence="1">Filopodium</location>
    </subcellularLocation>
    <subcellularLocation>
        <location evidence="1">Cell projection</location>
        <location evidence="1">Growth cone</location>
    </subcellularLocation>
    <subcellularLocation>
        <location evidence="1">Postsynaptic density</location>
    </subcellularLocation>
    <subcellularLocation>
        <location evidence="1">Cytoplasm</location>
        <location evidence="1">Cytoskeleton</location>
    </subcellularLocation>
    <text evidence="1">Localized to protruding lamellipodia and filopodia tips. Also localized to neuronal growth cones and synaptosomes. May shuttle from the postsynaptic densities to the nucleus (By similarity).</text>
</comment>
<comment type="alternative products">
    <event type="alternative splicing"/>
    <isoform>
        <id>Q8IZP0-1</id>
        <name>1</name>
        <sequence type="displayed"/>
    </isoform>
    <isoform>
        <id>Q8IZP0-2</id>
        <name>2</name>
        <name>long</name>
        <name>B48</name>
        <sequence type="described" ref="VSP_010749 VSP_010750 VSP_010751 VSP_010752"/>
    </isoform>
    <isoform>
        <id>Q8IZP0-3</id>
        <name>3</name>
        <sequence type="described" ref="VSP_010750 VSP_010752"/>
    </isoform>
    <isoform>
        <id>Q8IZP0-4</id>
        <name>4</name>
        <sequence type="described" ref="VSP_010750 VSP_010751 VSP_010752"/>
    </isoform>
    <isoform>
        <id>Q8IZP0-5</id>
        <name>5</name>
        <sequence type="described" ref="VSP_010749 VSP_010750"/>
    </isoform>
    <isoform>
        <id>Q8IZP0-6</id>
        <name>6</name>
        <sequence type="described" ref="VSP_010750 VSP_010751"/>
    </isoform>
    <isoform>
        <id>Q8IZP0-7</id>
        <name>7</name>
        <name>4</name>
        <sequence type="described" ref="VSP_010750 VSP_010751 VSP_010754 VSP_010755"/>
    </isoform>
    <isoform>
        <id>Q8IZP0-8</id>
        <name>8</name>
        <name>5</name>
        <sequence type="described" ref="VSP_010750 VSP_010751 VSP_010754 VSP_010752"/>
    </isoform>
    <isoform>
        <id>Q8IZP0-9</id>
        <name>9</name>
        <name>2</name>
        <sequence type="described" ref="VSP_010750"/>
    </isoform>
    <isoform>
        <id>Q8IZP0-10</id>
        <name>10</name>
        <name>B30</name>
        <sequence type="described" ref="VSP_010749 VSP_010750 VSP_010751 VSP_010754 VSP_010752 VSP_010753"/>
    </isoform>
    <isoform>
        <id>Q8IZP0-11</id>
        <name>11</name>
        <sequence type="described" ref="VSP_043403 VSP_010750 VSP_010751 VSP_010754 VSP_010752 VSP_010753"/>
    </isoform>
    <isoform>
        <id>Q8IZP0-12</id>
        <name>12</name>
        <sequence type="described" ref="VSP_044604 VSP_010752"/>
    </isoform>
    <text>Additional isoforms seem to exist.</text>
</comment>
<comment type="tissue specificity">
    <text evidence="8">Widely expressed, with highest expression in brain.</text>
</comment>
<comment type="domain">
    <text evidence="1">The t-SNARE coiled-coil homology domain is necessary and sufficient for interaction with STX1A.</text>
</comment>
<comment type="PTM">
    <text evidence="12 15">Phosphorylated on tyrosine residues after serum stimulation or induction by v-Abl. Seems to be phosphorylated at Tyr-53 by ABL1, required for nuclear but not for synaptic localization.</text>
</comment>
<comment type="disease">
    <text evidence="17">A chromosomal aberration involving ABI1 is a cause of acute leukemias. Translocation t(10;11)(p11.2;q23) with KMT2A/MLL1. ABI1 isoform 2 was found to be present in acute leukemia KMT2A/MLL1-ABI1 fusion transcript.</text>
</comment>
<comment type="similarity">
    <text evidence="26">Belongs to the ABI family.</text>
</comment>
<comment type="online information" name="Atlas of Genetics and Cytogenetics in Oncology and Haematology">
    <link uri="https://atlasgeneticsoncology.org/gene/233/ABI1"/>
</comment>
<accession>Q8IZP0</accession>
<accession>A9Z1Y6</accession>
<accession>B3KX62</accession>
<accession>B4DQ58</accession>
<accession>H7BXI6</accession>
<accession>O15147</accession>
<accession>O76049</accession>
<accession>O95060</accession>
<accession>Q5T2R3</accession>
<accession>Q5T2R4</accession>
<accession>Q5T2R6</accession>
<accession>Q5T2R7</accession>
<accession>Q5T2R9</accession>
<accession>Q5W070</accession>
<accession>Q5W072</accession>
<accession>Q8TB63</accession>
<accession>Q96S81</accession>
<accession>Q9NXZ9</accession>
<accession>Q9NYB8</accession>
<keyword id="KW-0002">3D-structure</keyword>
<keyword id="KW-0007">Acetylation</keyword>
<keyword id="KW-0025">Alternative splicing</keyword>
<keyword id="KW-0966">Cell projection</keyword>
<keyword id="KW-0160">Chromosomal rearrangement</keyword>
<keyword id="KW-0175">Coiled coil</keyword>
<keyword id="KW-0963">Cytoplasm</keyword>
<keyword id="KW-0206">Cytoskeleton</keyword>
<keyword id="KW-0903">Direct protein sequencing</keyword>
<keyword id="KW-0945">Host-virus interaction</keyword>
<keyword id="KW-0539">Nucleus</keyword>
<keyword id="KW-0597">Phosphoprotein</keyword>
<keyword id="KW-1267">Proteomics identification</keyword>
<keyword id="KW-1185">Reference proteome</keyword>
<keyword id="KW-0728">SH3 domain</keyword>
<keyword id="KW-0770">Synapse</keyword>
<reference key="1">
    <citation type="journal article" date="1997" name="Oncogene">
        <title>Isolation and characterization of e3B1, an eps8 binding protein that regulates cell growth.</title>
        <authorList>
            <person name="Biesova Z."/>
            <person name="Piccoli C."/>
            <person name="Wong W.T."/>
        </authorList>
    </citation>
    <scope>NUCLEOTIDE SEQUENCE [MRNA] (ISOFORM 6)</scope>
    <scope>PHOSPHORYLATION</scope>
    <scope>SUBCELLULAR LOCATION</scope>
    <scope>INTERACTION WITH EPS8 AND ABL1</scope>
</reference>
<reference key="2">
    <citation type="journal article" date="1998" name="J. Biol. Chem.">
        <title>Identification of a candidate human spectrin Src homology 3 domain-binding protein suggests a general mechanism of association of tyrosine kinases with the spectrin-based membrane skeleton.</title>
        <authorList>
            <person name="Ziemnicka-Kotula D."/>
            <person name="Xu J."/>
            <person name="Gu H."/>
            <person name="Potempska A."/>
            <person name="Kim K.S."/>
            <person name="Jenkins E.C."/>
            <person name="Trenkner E."/>
            <person name="Kotula L."/>
        </authorList>
    </citation>
    <scope>NUCLEOTIDE SEQUENCE [MRNA] (ISOFORM 1)</scope>
    <scope>ALTERNATIVE SPLICING (ISOFORMS 3; 7; 8 AND 9)</scope>
    <scope>INTERACTION WITH SPTA1</scope>
</reference>
<reference key="3">
    <citation type="journal article" date="2001" name="Gene">
        <title>Isolation of hNap1BP which interacts with human Nap 1 (NCKAP1) whose expression is down-regulated in Alzheimer's disease.</title>
        <authorList>
            <person name="Yamamoto A."/>
            <person name="Suzuki T."/>
            <person name="Sakaki Y."/>
        </authorList>
    </citation>
    <scope>NUCLEOTIDE SEQUENCE [MRNA] (ISOFORM 3)</scope>
    <scope>TISSUE SPECIFICITY</scope>
    <scope>INTERACTION WITH ABL1; NAP1 AND NCK1</scope>
</reference>
<reference key="4">
    <citation type="journal article" date="2003" name="FEBS Lett.">
        <title>Induction of colonic epithelial cell apoptosis by p47-dependent oxidants(1).</title>
        <authorList>
            <person name="Gu Y."/>
            <person name="Souza R.F."/>
            <person name="Wu R.F."/>
            <person name="Xu Y.C."/>
            <person name="Terada L.S."/>
        </authorList>
    </citation>
    <scope>NUCLEOTIDE SEQUENCE [MRNA] (ISOFORM 5)</scope>
    <scope>INTERACTION WITH NCF1</scope>
    <source>
        <tissue>Umbilical vein endothelial cell</tissue>
    </source>
</reference>
<reference key="5">
    <citation type="submission" date="1997-04" db="EMBL/GenBank/DDBJ databases">
        <title>A new member of the Abl interactor protein family, AblBP4.</title>
        <authorList>
            <person name="Wilson L.A."/>
            <person name="Fields D."/>
            <person name="Cruz L."/>
            <person name="Friesen J."/>
            <person name="Siminovitch K.A."/>
        </authorList>
    </citation>
    <scope>NUCLEOTIDE SEQUENCE [MRNA] (ISOFORM 4)</scope>
    <source>
        <tissue>T-cell</tissue>
    </source>
</reference>
<reference key="6">
    <citation type="submission" date="2000-03" db="EMBL/GenBank/DDBJ databases">
        <title>In silico cloning of the human SSH3BP1/e3B1 gene.</title>
        <authorList>
            <person name="Chikri M.M."/>
            <person name="Boutin M.P."/>
            <person name="Vaxillaire M.M."/>
            <person name="Froguel M.P."/>
        </authorList>
    </citation>
    <scope>NUCLEOTIDE SEQUENCE [GENOMIC DNA]</scope>
</reference>
<reference key="7">
    <citation type="submission" date="2000-04" db="EMBL/GenBank/DDBJ databases">
        <authorList>
            <person name="Quackenbush R.C."/>
            <person name="Pendergast A.M."/>
        </authorList>
    </citation>
    <scope>NUCLEOTIDE SEQUENCE [MRNA] (ISOFORM 2)</scope>
</reference>
<reference key="8">
    <citation type="journal article" date="2004" name="Nat. Genet.">
        <title>Complete sequencing and characterization of 21,243 full-length human cDNAs.</title>
        <authorList>
            <person name="Ota T."/>
            <person name="Suzuki Y."/>
            <person name="Nishikawa T."/>
            <person name="Otsuki T."/>
            <person name="Sugiyama T."/>
            <person name="Irie R."/>
            <person name="Wakamatsu A."/>
            <person name="Hayashi K."/>
            <person name="Sato H."/>
            <person name="Nagai K."/>
            <person name="Kimura K."/>
            <person name="Makita H."/>
            <person name="Sekine M."/>
            <person name="Obayashi M."/>
            <person name="Nishi T."/>
            <person name="Shibahara T."/>
            <person name="Tanaka T."/>
            <person name="Ishii S."/>
            <person name="Yamamoto J."/>
            <person name="Saito K."/>
            <person name="Kawai Y."/>
            <person name="Isono Y."/>
            <person name="Nakamura Y."/>
            <person name="Nagahari K."/>
            <person name="Murakami K."/>
            <person name="Yasuda T."/>
            <person name="Iwayanagi T."/>
            <person name="Wagatsuma M."/>
            <person name="Shiratori A."/>
            <person name="Sudo H."/>
            <person name="Hosoiri T."/>
            <person name="Kaku Y."/>
            <person name="Kodaira H."/>
            <person name="Kondo H."/>
            <person name="Sugawara M."/>
            <person name="Takahashi M."/>
            <person name="Kanda K."/>
            <person name="Yokoi T."/>
            <person name="Furuya T."/>
            <person name="Kikkawa E."/>
            <person name="Omura Y."/>
            <person name="Abe K."/>
            <person name="Kamihara K."/>
            <person name="Katsuta N."/>
            <person name="Sato K."/>
            <person name="Tanikawa M."/>
            <person name="Yamazaki M."/>
            <person name="Ninomiya K."/>
            <person name="Ishibashi T."/>
            <person name="Yamashita H."/>
            <person name="Murakawa K."/>
            <person name="Fujimori K."/>
            <person name="Tanai H."/>
            <person name="Kimata M."/>
            <person name="Watanabe M."/>
            <person name="Hiraoka S."/>
            <person name="Chiba Y."/>
            <person name="Ishida S."/>
            <person name="Ono Y."/>
            <person name="Takiguchi S."/>
            <person name="Watanabe S."/>
            <person name="Yosida M."/>
            <person name="Hotuta T."/>
            <person name="Kusano J."/>
            <person name="Kanehori K."/>
            <person name="Takahashi-Fujii A."/>
            <person name="Hara H."/>
            <person name="Tanase T.-O."/>
            <person name="Nomura Y."/>
            <person name="Togiya S."/>
            <person name="Komai F."/>
            <person name="Hara R."/>
            <person name="Takeuchi K."/>
            <person name="Arita M."/>
            <person name="Imose N."/>
            <person name="Musashino K."/>
            <person name="Yuuki H."/>
            <person name="Oshima A."/>
            <person name="Sasaki N."/>
            <person name="Aotsuka S."/>
            <person name="Yoshikawa Y."/>
            <person name="Matsunawa H."/>
            <person name="Ichihara T."/>
            <person name="Shiohata N."/>
            <person name="Sano S."/>
            <person name="Moriya S."/>
            <person name="Momiyama H."/>
            <person name="Satoh N."/>
            <person name="Takami S."/>
            <person name="Terashima Y."/>
            <person name="Suzuki O."/>
            <person name="Nakagawa S."/>
            <person name="Senoh A."/>
            <person name="Mizoguchi H."/>
            <person name="Goto Y."/>
            <person name="Shimizu F."/>
            <person name="Wakebe H."/>
            <person name="Hishigaki H."/>
            <person name="Watanabe T."/>
            <person name="Sugiyama A."/>
            <person name="Takemoto M."/>
            <person name="Kawakami B."/>
            <person name="Yamazaki M."/>
            <person name="Watanabe K."/>
            <person name="Kumagai A."/>
            <person name="Itakura S."/>
            <person name="Fukuzumi Y."/>
            <person name="Fujimori Y."/>
            <person name="Komiyama M."/>
            <person name="Tashiro H."/>
            <person name="Tanigami A."/>
            <person name="Fujiwara T."/>
            <person name="Ono T."/>
            <person name="Yamada K."/>
            <person name="Fujii Y."/>
            <person name="Ozaki K."/>
            <person name="Hirao M."/>
            <person name="Ohmori Y."/>
            <person name="Kawabata A."/>
            <person name="Hikiji T."/>
            <person name="Kobatake N."/>
            <person name="Inagaki H."/>
            <person name="Ikema Y."/>
            <person name="Okamoto S."/>
            <person name="Okitani R."/>
            <person name="Kawakami T."/>
            <person name="Noguchi S."/>
            <person name="Itoh T."/>
            <person name="Shigeta K."/>
            <person name="Senba T."/>
            <person name="Matsumura K."/>
            <person name="Nakajima Y."/>
            <person name="Mizuno T."/>
            <person name="Morinaga M."/>
            <person name="Sasaki M."/>
            <person name="Togashi T."/>
            <person name="Oyama M."/>
            <person name="Hata H."/>
            <person name="Watanabe M."/>
            <person name="Komatsu T."/>
            <person name="Mizushima-Sugano J."/>
            <person name="Satoh T."/>
            <person name="Shirai Y."/>
            <person name="Takahashi Y."/>
            <person name="Nakagawa K."/>
            <person name="Okumura K."/>
            <person name="Nagase T."/>
            <person name="Nomura N."/>
            <person name="Kikuchi H."/>
            <person name="Masuho Y."/>
            <person name="Yamashita R."/>
            <person name="Nakai K."/>
            <person name="Yada T."/>
            <person name="Nakamura Y."/>
            <person name="Ohara O."/>
            <person name="Isogai T."/>
            <person name="Sugano S."/>
        </authorList>
    </citation>
    <scope>NUCLEOTIDE SEQUENCE [LARGE SCALE MRNA] (ISOFORMS 2; 11 AND 12)</scope>
    <source>
        <tissue>Cerebellum</tissue>
    </source>
</reference>
<reference key="9">
    <citation type="journal article" date="2004" name="Nature">
        <title>The DNA sequence and comparative analysis of human chromosome 10.</title>
        <authorList>
            <person name="Deloukas P."/>
            <person name="Earthrowl M.E."/>
            <person name="Grafham D.V."/>
            <person name="Rubenfield M."/>
            <person name="French L."/>
            <person name="Steward C.A."/>
            <person name="Sims S.K."/>
            <person name="Jones M.C."/>
            <person name="Searle S."/>
            <person name="Scott C."/>
            <person name="Howe K."/>
            <person name="Hunt S.E."/>
            <person name="Andrews T.D."/>
            <person name="Gilbert J.G.R."/>
            <person name="Swarbreck D."/>
            <person name="Ashurst J.L."/>
            <person name="Taylor A."/>
            <person name="Battles J."/>
            <person name="Bird C.P."/>
            <person name="Ainscough R."/>
            <person name="Almeida J.P."/>
            <person name="Ashwell R.I.S."/>
            <person name="Ambrose K.D."/>
            <person name="Babbage A.K."/>
            <person name="Bagguley C.L."/>
            <person name="Bailey J."/>
            <person name="Banerjee R."/>
            <person name="Bates K."/>
            <person name="Beasley H."/>
            <person name="Bray-Allen S."/>
            <person name="Brown A.J."/>
            <person name="Brown J.Y."/>
            <person name="Burford D.C."/>
            <person name="Burrill W."/>
            <person name="Burton J."/>
            <person name="Cahill P."/>
            <person name="Camire D."/>
            <person name="Carter N.P."/>
            <person name="Chapman J.C."/>
            <person name="Clark S.Y."/>
            <person name="Clarke G."/>
            <person name="Clee C.M."/>
            <person name="Clegg S."/>
            <person name="Corby N."/>
            <person name="Coulson A."/>
            <person name="Dhami P."/>
            <person name="Dutta I."/>
            <person name="Dunn M."/>
            <person name="Faulkner L."/>
            <person name="Frankish A."/>
            <person name="Frankland J.A."/>
            <person name="Garner P."/>
            <person name="Garnett J."/>
            <person name="Gribble S."/>
            <person name="Griffiths C."/>
            <person name="Grocock R."/>
            <person name="Gustafson E."/>
            <person name="Hammond S."/>
            <person name="Harley J.L."/>
            <person name="Hart E."/>
            <person name="Heath P.D."/>
            <person name="Ho T.P."/>
            <person name="Hopkins B."/>
            <person name="Horne J."/>
            <person name="Howden P.J."/>
            <person name="Huckle E."/>
            <person name="Hynds C."/>
            <person name="Johnson C."/>
            <person name="Johnson D."/>
            <person name="Kana A."/>
            <person name="Kay M."/>
            <person name="Kimberley A.M."/>
            <person name="Kershaw J.K."/>
            <person name="Kokkinaki M."/>
            <person name="Laird G.K."/>
            <person name="Lawlor S."/>
            <person name="Lee H.M."/>
            <person name="Leongamornlert D.A."/>
            <person name="Laird G."/>
            <person name="Lloyd C."/>
            <person name="Lloyd D.M."/>
            <person name="Loveland J."/>
            <person name="Lovell J."/>
            <person name="McLaren S."/>
            <person name="McLay K.E."/>
            <person name="McMurray A."/>
            <person name="Mashreghi-Mohammadi M."/>
            <person name="Matthews L."/>
            <person name="Milne S."/>
            <person name="Nickerson T."/>
            <person name="Nguyen M."/>
            <person name="Overton-Larty E."/>
            <person name="Palmer S.A."/>
            <person name="Pearce A.V."/>
            <person name="Peck A.I."/>
            <person name="Pelan S."/>
            <person name="Phillimore B."/>
            <person name="Porter K."/>
            <person name="Rice C.M."/>
            <person name="Rogosin A."/>
            <person name="Ross M.T."/>
            <person name="Sarafidou T."/>
            <person name="Sehra H.K."/>
            <person name="Shownkeen R."/>
            <person name="Skuce C.D."/>
            <person name="Smith M."/>
            <person name="Standring L."/>
            <person name="Sycamore N."/>
            <person name="Tester J."/>
            <person name="Thorpe A."/>
            <person name="Torcasso W."/>
            <person name="Tracey A."/>
            <person name="Tromans A."/>
            <person name="Tsolas J."/>
            <person name="Wall M."/>
            <person name="Walsh J."/>
            <person name="Wang H."/>
            <person name="Weinstock K."/>
            <person name="West A.P."/>
            <person name="Willey D.L."/>
            <person name="Whitehead S.L."/>
            <person name="Wilming L."/>
            <person name="Wray P.W."/>
            <person name="Young L."/>
            <person name="Chen Y."/>
            <person name="Lovering R.C."/>
            <person name="Moschonas N.K."/>
            <person name="Siebert R."/>
            <person name="Fechtel K."/>
            <person name="Bentley D."/>
            <person name="Durbin R.M."/>
            <person name="Hubbard T."/>
            <person name="Doucette-Stamm L."/>
            <person name="Beck S."/>
            <person name="Smith D.R."/>
            <person name="Rogers J."/>
        </authorList>
    </citation>
    <scope>NUCLEOTIDE SEQUENCE [LARGE SCALE GENOMIC DNA]</scope>
</reference>
<reference key="10">
    <citation type="submission" date="2005-09" db="EMBL/GenBank/DDBJ databases">
        <authorList>
            <person name="Mural R.J."/>
            <person name="Istrail S."/>
            <person name="Sutton G.G."/>
            <person name="Florea L."/>
            <person name="Halpern A.L."/>
            <person name="Mobarry C.M."/>
            <person name="Lippert R."/>
            <person name="Walenz B."/>
            <person name="Shatkay H."/>
            <person name="Dew I."/>
            <person name="Miller J.R."/>
            <person name="Flanigan M.J."/>
            <person name="Edwards N.J."/>
            <person name="Bolanos R."/>
            <person name="Fasulo D."/>
            <person name="Halldorsson B.V."/>
            <person name="Hannenhalli S."/>
            <person name="Turner R."/>
            <person name="Yooseph S."/>
            <person name="Lu F."/>
            <person name="Nusskern D.R."/>
            <person name="Shue B.C."/>
            <person name="Zheng X.H."/>
            <person name="Zhong F."/>
            <person name="Delcher A.L."/>
            <person name="Huson D.H."/>
            <person name="Kravitz S.A."/>
            <person name="Mouchard L."/>
            <person name="Reinert K."/>
            <person name="Remington K.A."/>
            <person name="Clark A.G."/>
            <person name="Waterman M.S."/>
            <person name="Eichler E.E."/>
            <person name="Adams M.D."/>
            <person name="Hunkapiller M.W."/>
            <person name="Myers E.W."/>
            <person name="Venter J.C."/>
        </authorList>
    </citation>
    <scope>NUCLEOTIDE SEQUENCE [LARGE SCALE GENOMIC DNA]</scope>
</reference>
<reference key="11">
    <citation type="journal article" date="2004" name="Genome Res.">
        <title>The status, quality, and expansion of the NIH full-length cDNA project: the Mammalian Gene Collection (MGC).</title>
        <authorList>
            <consortium name="The MGC Project Team"/>
        </authorList>
    </citation>
    <scope>NUCLEOTIDE SEQUENCE [LARGE SCALE MRNA] (ISOFORM 5)</scope>
    <source>
        <tissue>Muscle</tissue>
    </source>
</reference>
<reference key="12">
    <citation type="journal article" date="2003" name="Nat. Biotechnol.">
        <title>Exploring proteomes and analyzing protein processing by mass spectrometric identification of sorted N-terminal peptides.</title>
        <authorList>
            <person name="Gevaert K."/>
            <person name="Goethals M."/>
            <person name="Martens L."/>
            <person name="Van Damme J."/>
            <person name="Staes A."/>
            <person name="Thomas G.R."/>
            <person name="Vandekerckhove J."/>
        </authorList>
    </citation>
    <scope>PROTEIN SEQUENCE OF 2-17</scope>
    <source>
        <tissue>Platelet</tissue>
    </source>
</reference>
<reference key="13">
    <citation type="submission" date="2007-07" db="UniProtKB">
        <authorList>
            <person name="Bienvenut W.V."/>
            <person name="Boldt K."/>
            <person name="von Kriegsheim A.F."/>
            <person name="Kolch W."/>
        </authorList>
    </citation>
    <scope>PROTEIN SEQUENCE OF 2-17; 139-154; 229-237 AND 451-477</scope>
    <scope>CLEAVAGE OF INITIATOR METHIONINE</scope>
    <scope>ACETYLATION AT ALA-2</scope>
    <scope>IDENTIFICATION BY MASS SPECTROMETRY</scope>
    <source>
        <tissue>Hepatoma</tissue>
    </source>
</reference>
<reference key="14">
    <citation type="journal article" date="2000" name="Mol. Cell. Biol.">
        <title>Abl interactor 1 binds to sos and inhibits epidermal growth factor- and v-Abl-induced activation of extracellular signal-regulated kinases.</title>
        <authorList>
            <person name="Fan P.-D."/>
            <person name="Goff S.P."/>
        </authorList>
    </citation>
    <scope>FUNCTION</scope>
    <scope>INTERACTION WITH SOS1; SOS2 AND GRB2</scope>
</reference>
<reference key="15">
    <citation type="journal article" date="1998" name="Blood">
        <title>ABI-1, a human homolog to mouse Abl-interactor 1, fuses the MLL gene in acute myeloid leukemia with t(10;11)(p11.2;q23).</title>
        <authorList>
            <person name="Taki T."/>
            <person name="Shibuya N."/>
            <person name="Taniwaki M."/>
            <person name="Hanada R."/>
            <person name="Morishita K."/>
            <person name="Bessho F."/>
            <person name="Yanagisawa M."/>
            <person name="Hayashi Y."/>
        </authorList>
    </citation>
    <scope>ALTERNATIVE SPLICING (ISOFORMS 2 AND 10)</scope>
    <scope>CHROMOSOMAL TRANSLOCATION WITH KMT2A</scope>
</reference>
<reference key="16">
    <citation type="journal article" date="2006" name="Cell">
        <title>Global, in vivo, and site-specific phosphorylation dynamics in signaling networks.</title>
        <authorList>
            <person name="Olsen J.V."/>
            <person name="Blagoev B."/>
            <person name="Gnad F."/>
            <person name="Macek B."/>
            <person name="Kumar C."/>
            <person name="Mortensen P."/>
            <person name="Mann M."/>
        </authorList>
    </citation>
    <scope>PHOSPHORYLATION [LARGE SCALE ANALYSIS] AT SER-225</scope>
    <scope>IDENTIFICATION BY MASS SPECTROMETRY [LARGE SCALE ANALYSIS]</scope>
    <source>
        <tissue>Cervix carcinoma</tissue>
    </source>
</reference>
<reference key="17">
    <citation type="journal article" date="2006" name="PLoS Biol.">
        <title>Hem-1 complexes are essential for Rac activation, actin polymerization, and myosin regulation during neutrophil chemotaxis.</title>
        <authorList>
            <person name="Weiner O.D."/>
            <person name="Rentel M.C."/>
            <person name="Ott A."/>
            <person name="Brown G.E."/>
            <person name="Jedrychowski M."/>
            <person name="Yaffe M.B."/>
            <person name="Gygi S.P."/>
            <person name="Cantley L.C."/>
            <person name="Bourne H.R."/>
            <person name="Kirschner M.W."/>
        </authorList>
    </citation>
    <scope>IDENTIFICATION IN THE WAVE2 COMPLEX</scope>
</reference>
<reference key="18">
    <citation type="journal article" date="2008" name="Biochim. Biophys. Acta">
        <title>Allosteric inhibition of the nonMyristoylated c-Abl tyrosine kinase by phosphopeptides derived from Abi1/Hssh3bp1.</title>
        <authorList>
            <person name="Xiong X."/>
            <person name="Cui P."/>
            <person name="Hossain S."/>
            <person name="Xu R."/>
            <person name="Warner B."/>
            <person name="Guo X."/>
            <person name="An X."/>
            <person name="Debnath A.K."/>
            <person name="Cowburn D."/>
            <person name="Kotula L."/>
        </authorList>
    </citation>
    <scope>FUNCTION</scope>
    <scope>PHOSPHORYLATION AT TYR-213</scope>
</reference>
<reference key="19">
    <citation type="journal article" date="2008" name="J. Proteome Res.">
        <title>Phosphoproteome of resting human platelets.</title>
        <authorList>
            <person name="Zahedi R.P."/>
            <person name="Lewandrowski U."/>
            <person name="Wiesner J."/>
            <person name="Wortelkamp S."/>
            <person name="Moebius J."/>
            <person name="Schuetz C."/>
            <person name="Walter U."/>
            <person name="Gambaryan S."/>
            <person name="Sickmann A."/>
        </authorList>
    </citation>
    <scope>PHOSPHORYLATION [LARGE SCALE ANALYSIS] AT SER-225</scope>
    <scope>IDENTIFICATION BY MASS SPECTROMETRY [LARGE SCALE ANALYSIS]</scope>
    <source>
        <tissue>Platelet</tissue>
    </source>
</reference>
<reference key="20">
    <citation type="journal article" date="2008" name="Mol. Cell">
        <title>Kinase-selective enrichment enables quantitative phosphoproteomics of the kinome across the cell cycle.</title>
        <authorList>
            <person name="Daub H."/>
            <person name="Olsen J.V."/>
            <person name="Bairlein M."/>
            <person name="Gnad F."/>
            <person name="Oppermann F.S."/>
            <person name="Korner R."/>
            <person name="Greff Z."/>
            <person name="Keri G."/>
            <person name="Stemmann O."/>
            <person name="Mann M."/>
        </authorList>
    </citation>
    <scope>PHOSPHORYLATION [LARGE SCALE ANALYSIS] AT SER-225</scope>
    <scope>IDENTIFICATION BY MASS SPECTROMETRY [LARGE SCALE ANALYSIS]</scope>
    <source>
        <tissue>Cervix carcinoma</tissue>
    </source>
</reference>
<reference key="21">
    <citation type="journal article" date="2008" name="Proc. Natl. Acad. Sci. U.S.A.">
        <title>A quantitative atlas of mitotic phosphorylation.</title>
        <authorList>
            <person name="Dephoure N."/>
            <person name="Zhou C."/>
            <person name="Villen J."/>
            <person name="Beausoleil S.A."/>
            <person name="Bakalarski C.E."/>
            <person name="Elledge S.J."/>
            <person name="Gygi S.P."/>
        </authorList>
    </citation>
    <scope>PHOSPHORYLATION [LARGE SCALE ANALYSIS] AT SER-183 AND SER-216</scope>
    <scope>IDENTIFICATION BY MASS SPECTROMETRY [LARGE SCALE ANALYSIS]</scope>
    <source>
        <tissue>Cervix carcinoma</tissue>
    </source>
</reference>
<reference key="22">
    <citation type="journal article" date="2009" name="PLoS Genet.">
        <title>Requirements for F-BAR proteins TOCA-1 and TOCA-2 in actin dynamics and membrane trafficking during Caenorhabditis elegans oocyte growth and embryonic epidermal morphogenesis.</title>
        <authorList>
            <person name="Giuliani C."/>
            <person name="Troglio F."/>
            <person name="Bai Z."/>
            <person name="Patel F.B."/>
            <person name="Zucconi A."/>
            <person name="Malabarba M.G."/>
            <person name="Disanza A."/>
            <person name="Stradal T.B."/>
            <person name="Cassata G."/>
            <person name="Confalonieri S."/>
            <person name="Hardin J.D."/>
            <person name="Soto M.C."/>
            <person name="Grant B.D."/>
            <person name="Scita G."/>
        </authorList>
    </citation>
    <scope>INTERACTION WITH FNBP1L; WASF2 AND CDC42</scope>
</reference>
<reference key="23">
    <citation type="journal article" date="2010" name="Sci. Signal.">
        <title>Quantitative phosphoproteomics reveals widespread full phosphorylation site occupancy during mitosis.</title>
        <authorList>
            <person name="Olsen J.V."/>
            <person name="Vermeulen M."/>
            <person name="Santamaria A."/>
            <person name="Kumar C."/>
            <person name="Miller M.L."/>
            <person name="Jensen L.J."/>
            <person name="Gnad F."/>
            <person name="Cox J."/>
            <person name="Jensen T.S."/>
            <person name="Nigg E.A."/>
            <person name="Brunak S."/>
            <person name="Mann M."/>
        </authorList>
    </citation>
    <scope>PHOSPHORYLATION [LARGE SCALE ANALYSIS] AT SER-225 AND THR-507</scope>
    <scope>IDENTIFICATION BY MASS SPECTROMETRY [LARGE SCALE ANALYSIS]</scope>
    <source>
        <tissue>Cervix carcinoma</tissue>
    </source>
</reference>
<reference key="24">
    <citation type="journal article" date="2011" name="BMC Syst. Biol.">
        <title>Initial characterization of the human central proteome.</title>
        <authorList>
            <person name="Burkard T.R."/>
            <person name="Planyavsky M."/>
            <person name="Kaupe I."/>
            <person name="Breitwieser F.P."/>
            <person name="Buerckstuemmer T."/>
            <person name="Bennett K.L."/>
            <person name="Superti-Furga G."/>
            <person name="Colinge J."/>
        </authorList>
    </citation>
    <scope>IDENTIFICATION BY MASS SPECTROMETRY [LARGE SCALE ANALYSIS]</scope>
</reference>
<reference key="25">
    <citation type="journal article" date="2011" name="Sci. Signal.">
        <title>System-wide temporal characterization of the proteome and phosphoproteome of human embryonic stem cell differentiation.</title>
        <authorList>
            <person name="Rigbolt K.T."/>
            <person name="Prokhorova T.A."/>
            <person name="Akimov V."/>
            <person name="Henningsen J."/>
            <person name="Johansen P.T."/>
            <person name="Kratchmarova I."/>
            <person name="Kassem M."/>
            <person name="Mann M."/>
            <person name="Olsen J.V."/>
            <person name="Blagoev B."/>
        </authorList>
    </citation>
    <scope>PHOSPHORYLATION [LARGE SCALE ANALYSIS] AT SER-222; SER-225 AND SER-323</scope>
    <scope>IDENTIFICATION BY MASS SPECTROMETRY [LARGE SCALE ANALYSIS]</scope>
</reference>
<reference key="26">
    <citation type="journal article" date="2012" name="Mol. Cell. Proteomics">
        <title>Comparative large-scale characterisation of plant vs. mammal proteins reveals similar and idiosyncratic N-alpha acetylation features.</title>
        <authorList>
            <person name="Bienvenut W.V."/>
            <person name="Sumpton D."/>
            <person name="Martinez A."/>
            <person name="Lilla S."/>
            <person name="Espagne C."/>
            <person name="Meinnel T."/>
            <person name="Giglione C."/>
        </authorList>
    </citation>
    <scope>ACETYLATION [LARGE SCALE ANALYSIS] AT ALA-2</scope>
    <scope>CLEAVAGE OF INITIATOR METHIONINE [LARGE SCALE ANALYSIS]</scope>
    <scope>IDENTIFICATION BY MASS SPECTROMETRY [LARGE SCALE ANALYSIS]</scope>
</reference>
<reference key="27">
    <citation type="journal article" date="2012" name="Proc. Natl. Acad. Sci. U.S.A.">
        <title>N-terminal acetylome analyses and functional insights of the N-terminal acetyltransferase NatB.</title>
        <authorList>
            <person name="Van Damme P."/>
            <person name="Lasa M."/>
            <person name="Polevoda B."/>
            <person name="Gazquez C."/>
            <person name="Elosegui-Artola A."/>
            <person name="Kim D.S."/>
            <person name="De Juan-Pardo E."/>
            <person name="Demeyer K."/>
            <person name="Hole K."/>
            <person name="Larrea E."/>
            <person name="Timmerman E."/>
            <person name="Prieto J."/>
            <person name="Arnesen T."/>
            <person name="Sherman F."/>
            <person name="Gevaert K."/>
            <person name="Aldabe R."/>
        </authorList>
    </citation>
    <scope>ACETYLATION [LARGE SCALE ANALYSIS] AT ALA-2</scope>
    <scope>CLEAVAGE OF INITIATOR METHIONINE [LARGE SCALE ANALYSIS]</scope>
    <scope>IDENTIFICATION BY MASS SPECTROMETRY [LARGE SCALE ANALYSIS]</scope>
</reference>
<reference key="28">
    <citation type="journal article" date="2013" name="J. Proteome Res.">
        <title>Toward a comprehensive characterization of a human cancer cell phosphoproteome.</title>
        <authorList>
            <person name="Zhou H."/>
            <person name="Di Palma S."/>
            <person name="Preisinger C."/>
            <person name="Peng M."/>
            <person name="Polat A.N."/>
            <person name="Heck A.J."/>
            <person name="Mohammed S."/>
        </authorList>
    </citation>
    <scope>PHOSPHORYLATION [LARGE SCALE ANALYSIS] AT SER-183; TYR-213; SER-225; SER-319 AND SER-323</scope>
    <scope>IDENTIFICATION BY MASS SPECTROMETRY [LARGE SCALE ANALYSIS]</scope>
    <source>
        <tissue>Cervix carcinoma</tissue>
        <tissue>Erythroleukemia</tissue>
    </source>
</reference>
<reference key="29">
    <citation type="journal article" date="2014" name="Cell Host Microbe">
        <title>HCMV pUL135 remodels the actin cytoskeleton to impair immune recognition of infected cells.</title>
        <authorList>
            <person name="Stanton R.J."/>
            <person name="Prod'homme V."/>
            <person name="Purbhoo M.A."/>
            <person name="Moore M."/>
            <person name="Aicheler R.J."/>
            <person name="Heinzmann M."/>
            <person name="Bailer S.M."/>
            <person name="Haas J."/>
            <person name="Antrobus R."/>
            <person name="Weekes M.P."/>
            <person name="Lehner P.J."/>
            <person name="Vojtesek B."/>
            <person name="Miners K.L."/>
            <person name="Man S."/>
            <person name="Wilkie G.S."/>
            <person name="Davison A.J."/>
            <person name="Wang E.C."/>
            <person name="Tomasec P."/>
            <person name="Wilkinson G.W."/>
        </authorList>
    </citation>
    <scope>INTERACTION WITH HUMAN CYTOMEGALOVIRUS PROTEIN UL135 (MICROBIAL INFECTION)</scope>
</reference>
<reference key="30">
    <citation type="journal article" date="2014" name="J. Proteomics">
        <title>An enzyme assisted RP-RPLC approach for in-depth analysis of human liver phosphoproteome.</title>
        <authorList>
            <person name="Bian Y."/>
            <person name="Song C."/>
            <person name="Cheng K."/>
            <person name="Dong M."/>
            <person name="Wang F."/>
            <person name="Huang J."/>
            <person name="Sun D."/>
            <person name="Wang L."/>
            <person name="Ye M."/>
            <person name="Zou H."/>
        </authorList>
    </citation>
    <scope>PHOSPHORYLATION [LARGE SCALE ANALYSIS] AT THR-174; THR-178; SER-183; SER-187; SER-222 AND SER-225</scope>
    <scope>IDENTIFICATION BY MASS SPECTROMETRY [LARGE SCALE ANALYSIS]</scope>
    <source>
        <tissue>Liver</tissue>
    </source>
</reference>
<protein>
    <recommendedName>
        <fullName>Abl interactor 1</fullName>
    </recommendedName>
    <alternativeName>
        <fullName>Abelson interactor 1</fullName>
        <shortName>Abi-1</shortName>
    </alternativeName>
    <alternativeName>
        <fullName>Abl-binding protein 4</fullName>
        <shortName>AblBP4</shortName>
    </alternativeName>
    <alternativeName>
        <fullName>Eps8 SH3 domain-binding protein</fullName>
        <shortName>Eps8-binding protein</shortName>
    </alternativeName>
    <alternativeName>
        <fullName>Nap1-binding protein</fullName>
        <shortName>Nap1BP</shortName>
    </alternativeName>
    <alternativeName>
        <fullName>Spectrin SH3 domain-binding protein 1</fullName>
    </alternativeName>
    <alternativeName>
        <fullName>e3B1</fullName>
    </alternativeName>
</protein>
<feature type="initiator methionine" description="Removed" evidence="9 18 34 35">
    <location>
        <position position="1"/>
    </location>
</feature>
<feature type="chain" id="PRO_0000191787" description="Abl interactor 1">
    <location>
        <begin position="2"/>
        <end position="508"/>
    </location>
</feature>
<feature type="domain" description="t-SNARE coiled-coil homology" evidence="5">
    <location>
        <begin position="45"/>
        <end position="107"/>
    </location>
</feature>
<feature type="domain" description="SH3" evidence="4">
    <location>
        <begin position="446"/>
        <end position="505"/>
    </location>
</feature>
<feature type="region of interest" description="Required for binding to WASF1" evidence="1">
    <location>
        <begin position="18"/>
        <end position="79"/>
    </location>
</feature>
<feature type="region of interest" description="Disordered" evidence="6">
    <location>
        <begin position="159"/>
        <end position="290"/>
    </location>
</feature>
<feature type="region of interest" description="Disordered" evidence="6">
    <location>
        <begin position="306"/>
        <end position="375"/>
    </location>
</feature>
<feature type="region of interest" description="Disordered" evidence="6">
    <location>
        <begin position="388"/>
        <end position="421"/>
    </location>
</feature>
<feature type="compositionally biased region" description="Polar residues" evidence="6">
    <location>
        <begin position="161"/>
        <end position="175"/>
    </location>
</feature>
<feature type="compositionally biased region" description="Polar residues" evidence="6">
    <location>
        <begin position="222"/>
        <end position="235"/>
    </location>
</feature>
<feature type="compositionally biased region" description="Low complexity" evidence="6">
    <location>
        <begin position="248"/>
        <end position="258"/>
    </location>
</feature>
<feature type="compositionally biased region" description="Pro residues" evidence="6">
    <location>
        <begin position="278"/>
        <end position="290"/>
    </location>
</feature>
<feature type="compositionally biased region" description="Polar residues" evidence="6">
    <location>
        <begin position="307"/>
        <end position="322"/>
    </location>
</feature>
<feature type="compositionally biased region" description="Polar residues" evidence="6">
    <location>
        <begin position="337"/>
        <end position="347"/>
    </location>
</feature>
<feature type="compositionally biased region" description="Pro residues" evidence="6">
    <location>
        <begin position="393"/>
        <end position="403"/>
    </location>
</feature>
<feature type="compositionally biased region" description="Pro residues" evidence="6">
    <location>
        <begin position="410"/>
        <end position="419"/>
    </location>
</feature>
<feature type="site" description="Breakpoint for translocation to form KMT2A/MLL1-ABI1">
    <location>
        <begin position="95"/>
        <end position="96"/>
    </location>
</feature>
<feature type="modified residue" description="N-acetylalanine" evidence="18 34 35">
    <location>
        <position position="2"/>
    </location>
</feature>
<feature type="modified residue" description="Phosphotyrosine" evidence="3">
    <location>
        <position position="53"/>
    </location>
</feature>
<feature type="modified residue" description="Phosphothreonine" evidence="37">
    <location>
        <position position="174"/>
    </location>
</feature>
<feature type="modified residue" description="Phosphothreonine" evidence="37">
    <location>
        <position position="178"/>
    </location>
</feature>
<feature type="modified residue" description="Phosphoserine" evidence="30 36 37">
    <location>
        <position position="183"/>
    </location>
</feature>
<feature type="modified residue" description="Phosphoserine" evidence="37">
    <location>
        <position position="187"/>
    </location>
</feature>
<feature type="modified residue" description="Phosphotyrosine; by ABL1" evidence="12 36">
    <location>
        <position position="213"/>
    </location>
</feature>
<feature type="modified residue" description="Phosphothreonine" evidence="2">
    <location>
        <position position="215"/>
    </location>
</feature>
<feature type="modified residue" description="Phosphoserine" evidence="30">
    <location>
        <position position="216"/>
    </location>
</feature>
<feature type="modified residue" description="Phosphoserine" evidence="33 37">
    <location>
        <position position="222"/>
    </location>
</feature>
<feature type="modified residue" description="Phosphoserine" evidence="28 29 31 32 33 36 37">
    <location>
        <position position="225"/>
    </location>
</feature>
<feature type="modified residue" description="Phosphoserine" evidence="36">
    <location>
        <position position="319"/>
    </location>
</feature>
<feature type="modified residue" description="Phosphoserine" evidence="33 36">
    <location>
        <position position="323"/>
    </location>
</feature>
<feature type="modified residue" description="Phosphotyrosine" evidence="2">
    <location>
        <position position="455"/>
    </location>
</feature>
<feature type="modified residue" description="Phosphoserine" evidence="3">
    <location>
        <position position="466"/>
    </location>
</feature>
<feature type="modified residue" description="Phosphothreonine" evidence="32">
    <location>
        <position position="507"/>
    </location>
</feature>
<feature type="splice variant" id="VSP_044604" description="In isoform 12." evidence="21">
    <original>I</original>
    <variation>IQRHGFAVLLCLLSNSWP</variation>
    <location>
        <position position="38"/>
    </location>
</feature>
<feature type="splice variant" id="VSP_043403" description="In isoform 11." evidence="21">
    <location>
        <begin position="96"/>
        <end position="159"/>
    </location>
</feature>
<feature type="splice variant" id="VSP_010749" description="In isoform 2, isoform 5 and isoform 10." evidence="20 21 22 25">
    <location>
        <begin position="154"/>
        <end position="158"/>
    </location>
</feature>
<feature type="splice variant" id="VSP_010750" description="In isoform 2, isoform 3, isoform 4, isoform 5, isoform 6, isoform 7, isoform 8, isoform 9, isoform 10 and isoform 11." evidence="19 20 21 22 23 24 25">
    <location>
        <begin position="274"/>
        <end position="300"/>
    </location>
</feature>
<feature type="splice variant" id="VSP_010751" description="In isoform 2, isoform 4, isoform 6, isoform 7, isoform 8, isoform 10 and isoform 11." evidence="20 21 22 23 24 25">
    <location>
        <position position="301"/>
    </location>
</feature>
<feature type="splice variant" id="VSP_010754" description="In isoform 7, isoform 8, isoform 10 and isoform 11." evidence="20 21 22 24">
    <location>
        <begin position="302"/>
        <end position="359"/>
    </location>
</feature>
<feature type="splice variant" id="VSP_010752" description="In isoform 2, isoform 3, isoform 4, isoform 8, isoform 10, isoform 11 and isoform 12." evidence="19 20 21 22 24 25">
    <location>
        <begin position="360"/>
        <end position="388"/>
    </location>
</feature>
<feature type="splice variant" id="VSP_010755" description="In isoform 7." evidence="24">
    <original>I</original>
    <variation>V</variation>
    <location>
        <position position="360"/>
    </location>
</feature>
<feature type="splice variant" id="VSP_010753" description="In isoform 10 and isoform 11." evidence="21">
    <original>I</original>
    <variation>V</variation>
    <location>
        <position position="389"/>
    </location>
</feature>
<feature type="sequence variant" id="VAR_048159" description="In dbSNP:rs2306236.">
    <original>G</original>
    <variation>A</variation>
    <location>
        <position position="331"/>
    </location>
</feature>
<feature type="sequence conflict" description="In Ref. 2; AAC39757." evidence="26" ref="2">
    <original>P</original>
    <variation>L</variation>
    <location>
        <position position="177"/>
    </location>
</feature>
<feature type="sequence conflict" description="In Ref. 2; AAC39757 and 4; AAN28379." evidence="26" ref="2 4">
    <original>S</original>
    <variation>F</variation>
    <location>
        <position position="410"/>
    </location>
</feature>
<feature type="sequence conflict" description="In Ref. 8; BAG54374." evidence="26" ref="8">
    <original>D</original>
    <variation>G</variation>
    <location>
        <position position="437"/>
    </location>
</feature>
<sequence>MAELQMLLEEEIPSGKRALIESYQNLTRVADYCENNYIQATDKRKALEETKAYTTQSLASVAYQINALANNVLQLLDIQASQLRRMESSINHISQTVDIHKEKVARREIGILTTNKNTSRTHKIIAPANMERPVRYIRKPIDYTVLDDVGHGVKWLKAKHGNNQPARTGTLSRTNPPTQKPPSPPMSGRGTLGRNTPYKTLEPVKPPTVPNDYMTSPARLGSQHSPGRTASLNQRPRTHSGSSGGSGSRENSGSSSIGIPIAVPTPSPPTIGPENISVPPPSGAPPAPPLAPLLPVSTVIAAPGSAPGSQYGTMTRQISRHNSTTSSTSSGGYRRTPSVTAQFSAQPHVNGGPLYSQNSISIAPPPPPMPQLTPQIPLTGFVARVQENIADSPTPPPPPPPDDIPMFDDSPPPPPPPPVDYEDEEAAVVQYNDPYADGDPAWAPKNYIEKVVAIYDYTKDKDDELSFMEGAIIYVIKKNDDGWYEGVCNRVTGLFPGNYVESIMHYTD</sequence>
<name>ABI1_HUMAN</name>
<evidence type="ECO:0000250" key="1"/>
<evidence type="ECO:0000250" key="2">
    <source>
        <dbReference type="UniProtKB" id="Q8CBW3"/>
    </source>
</evidence>
<evidence type="ECO:0000250" key="3">
    <source>
        <dbReference type="UniProtKB" id="Q9QZM5"/>
    </source>
</evidence>
<evidence type="ECO:0000255" key="4">
    <source>
        <dbReference type="PROSITE-ProRule" id="PRU00192"/>
    </source>
</evidence>
<evidence type="ECO:0000255" key="5">
    <source>
        <dbReference type="PROSITE-ProRule" id="PRU00202"/>
    </source>
</evidence>
<evidence type="ECO:0000256" key="6">
    <source>
        <dbReference type="SAM" id="MobiDB-lite"/>
    </source>
</evidence>
<evidence type="ECO:0000269" key="7">
    <source>
    </source>
</evidence>
<evidence type="ECO:0000269" key="8">
    <source>
    </source>
</evidence>
<evidence type="ECO:0000269" key="9">
    <source>
    </source>
</evidence>
<evidence type="ECO:0000269" key="10">
    <source>
    </source>
</evidence>
<evidence type="ECO:0000269" key="11">
    <source>
    </source>
</evidence>
<evidence type="ECO:0000269" key="12">
    <source>
    </source>
</evidence>
<evidence type="ECO:0000269" key="13">
    <source>
    </source>
</evidence>
<evidence type="ECO:0000269" key="14">
    <source>
    </source>
</evidence>
<evidence type="ECO:0000269" key="15">
    <source>
    </source>
</evidence>
<evidence type="ECO:0000269" key="16">
    <source>
    </source>
</evidence>
<evidence type="ECO:0000269" key="17">
    <source>
    </source>
</evidence>
<evidence type="ECO:0000269" key="18">
    <source ref="13"/>
</evidence>
<evidence type="ECO:0000303" key="19">
    <source>
    </source>
</evidence>
<evidence type="ECO:0000303" key="20">
    <source>
    </source>
</evidence>
<evidence type="ECO:0000303" key="21">
    <source>
    </source>
</evidence>
<evidence type="ECO:0000303" key="22">
    <source>
    </source>
</evidence>
<evidence type="ECO:0000303" key="23">
    <source>
    </source>
</evidence>
<evidence type="ECO:0000303" key="24">
    <source ref="5"/>
</evidence>
<evidence type="ECO:0000303" key="25">
    <source ref="7"/>
</evidence>
<evidence type="ECO:0000305" key="26"/>
<evidence type="ECO:0000312" key="27">
    <source>
        <dbReference type="HGNC" id="HGNC:11320"/>
    </source>
</evidence>
<evidence type="ECO:0007744" key="28">
    <source>
    </source>
</evidence>
<evidence type="ECO:0007744" key="29">
    <source>
    </source>
</evidence>
<evidence type="ECO:0007744" key="30">
    <source>
    </source>
</evidence>
<evidence type="ECO:0007744" key="31">
    <source>
    </source>
</evidence>
<evidence type="ECO:0007744" key="32">
    <source>
    </source>
</evidence>
<evidence type="ECO:0007744" key="33">
    <source>
    </source>
</evidence>
<evidence type="ECO:0007744" key="34">
    <source>
    </source>
</evidence>
<evidence type="ECO:0007744" key="35">
    <source>
    </source>
</evidence>
<evidence type="ECO:0007744" key="36">
    <source>
    </source>
</evidence>
<evidence type="ECO:0007744" key="37">
    <source>
    </source>
</evidence>
<gene>
    <name evidence="27" type="primary">ABI1</name>
    <name type="synonym">SSH3BP1</name>
</gene>